<evidence type="ECO:0000255" key="1"/>
<evidence type="ECO:0000255" key="2">
    <source>
        <dbReference type="PROSITE-ProRule" id="PRU00434"/>
    </source>
</evidence>
<evidence type="ECO:0000255" key="3">
    <source>
        <dbReference type="PROSITE-ProRule" id="PRU00441"/>
    </source>
</evidence>
<evidence type="ECO:0000256" key="4">
    <source>
        <dbReference type="SAM" id="MobiDB-lite"/>
    </source>
</evidence>
<evidence type="ECO:0000269" key="5">
    <source>
    </source>
</evidence>
<evidence type="ECO:0000269" key="6">
    <source>
    </source>
</evidence>
<evidence type="ECO:0000269" key="7">
    <source>
    </source>
</evidence>
<evidence type="ECO:0000269" key="8">
    <source>
    </source>
</evidence>
<evidence type="ECO:0000269" key="9">
    <source>
    </source>
</evidence>
<evidence type="ECO:0000269" key="10">
    <source>
    </source>
</evidence>
<evidence type="ECO:0000269" key="11">
    <source>
    </source>
</evidence>
<evidence type="ECO:0000269" key="12">
    <source>
    </source>
</evidence>
<evidence type="ECO:0000269" key="13">
    <source>
    </source>
</evidence>
<evidence type="ECO:0000269" key="14">
    <source>
    </source>
</evidence>
<evidence type="ECO:0000269" key="15">
    <source>
    </source>
</evidence>
<evidence type="ECO:0000269" key="16">
    <source>
    </source>
</evidence>
<evidence type="ECO:0000269" key="17">
    <source>
    </source>
</evidence>
<evidence type="ECO:0000269" key="18">
    <source>
    </source>
</evidence>
<evidence type="ECO:0000269" key="19">
    <source>
    </source>
</evidence>
<evidence type="ECO:0000269" key="20">
    <source>
    </source>
</evidence>
<evidence type="ECO:0000303" key="21">
    <source>
    </source>
</evidence>
<evidence type="ECO:0000303" key="22">
    <source>
    </source>
</evidence>
<evidence type="ECO:0000303" key="23">
    <source>
    </source>
</evidence>
<evidence type="ECO:0000303" key="24">
    <source ref="3"/>
</evidence>
<evidence type="ECO:0000305" key="25"/>
<evidence type="ECO:0000305" key="26">
    <source>
    </source>
</evidence>
<evidence type="ECO:0000305" key="27">
    <source>
    </source>
</evidence>
<evidence type="ECO:0000305" key="28">
    <source>
    </source>
</evidence>
<evidence type="ECO:0000305" key="29">
    <source>
    </source>
</evidence>
<evidence type="ECO:0000305" key="30">
    <source>
    </source>
</evidence>
<evidence type="ECO:0000305" key="31">
    <source>
    </source>
</evidence>
<evidence type="ECO:0000305" key="32">
    <source>
    </source>
</evidence>
<evidence type="ECO:0007744" key="33">
    <source>
    </source>
</evidence>
<evidence type="ECO:0007744" key="34">
    <source>
    </source>
</evidence>
<evidence type="ECO:0007744" key="35">
    <source>
    </source>
</evidence>
<evidence type="ECO:0007744" key="36">
    <source>
    </source>
</evidence>
<evidence type="ECO:0007829" key="37">
    <source>
        <dbReference type="PDB" id="8BJF"/>
    </source>
</evidence>
<evidence type="ECO:0007829" key="38">
    <source>
        <dbReference type="PDB" id="8IZ8"/>
    </source>
</evidence>
<evidence type="ECO:0007829" key="39">
    <source>
        <dbReference type="PDB" id="8IZ9"/>
    </source>
</evidence>
<evidence type="ECO:0007829" key="40">
    <source>
        <dbReference type="PDB" id="8IZA"/>
    </source>
</evidence>
<evidence type="ECO:0007829" key="41">
    <source>
        <dbReference type="PDB" id="8J3Z"/>
    </source>
</evidence>
<evidence type="ECO:0007829" key="42">
    <source>
        <dbReference type="PDB" id="8XOK"/>
    </source>
</evidence>
<evidence type="ECO:0007829" key="43">
    <source>
        <dbReference type="PDB" id="8XOL"/>
    </source>
</evidence>
<evidence type="ECO:0007829" key="44">
    <source>
        <dbReference type="PDB" id="8XOM"/>
    </source>
</evidence>
<comment type="function">
    <text evidence="5 6 7 8 9 10 11 12 13 14 15 16 19">ATP-dependent transporter of the ATP-binding cassette (ABC) family that actively extrudes physiological compounds and xenobiotics from cells. Transports a range of endogenous molecules that have a key role in cellular communication and signaling, including cyclic nucleotides such as cyclic AMP (cAMP) and cyclic GMP (cGMP), bile acids, steroid conjugates, urate, and prostaglandins (PubMed:11856762, PubMed:12523936, PubMed:12835412, PubMed:12883481, PubMed:15364914, PubMed:15454390, PubMed:16282361, PubMed:17959747, PubMed:18300232, PubMed:26721430). Mediates the ATP-dependent efflux of glutathione conjugates such as leukotriene C4 (LTC4) and leukotriene B4 (LTB4) too. The presence of GSH is necessary for the ATP-dependent transport of LTB4, whereas GSH is not required for the transport of LTC4 (PubMed:17959747). Mediates the cotransport of bile acids with reduced glutathione (GSH) (PubMed:12523936, PubMed:12883481, PubMed:16282361). Transports a wide range of drugs and their metabolites, including anticancer, antiviral and antibiotics molecules (PubMed:11856762, PubMed:12105214, PubMed:15454390, PubMed:17344354, PubMed:18300232). Confers resistance to anticancer agents such as methotrexate (PubMed:11106685).</text>
</comment>
<comment type="catalytic activity">
    <reaction evidence="6 7 12 14 16">
        <text>ATP + H2O + xenobioticSide 1 = ADP + phosphate + xenobioticSide 2.</text>
        <dbReference type="EC" id="7.6.2.2"/>
    </reaction>
</comment>
<comment type="catalytic activity">
    <reaction evidence="6 15 19">
        <text>an S-substituted glutathione(in) + ATP + H2O = an S-substituted glutathione(out) + ADP + phosphate + H(+)</text>
        <dbReference type="Rhea" id="RHEA:19121"/>
        <dbReference type="ChEBI" id="CHEBI:15377"/>
        <dbReference type="ChEBI" id="CHEBI:15378"/>
        <dbReference type="ChEBI" id="CHEBI:30616"/>
        <dbReference type="ChEBI" id="CHEBI:43474"/>
        <dbReference type="ChEBI" id="CHEBI:90779"/>
        <dbReference type="ChEBI" id="CHEBI:456216"/>
        <dbReference type="EC" id="7.6.2.3"/>
    </reaction>
    <physiologicalReaction direction="left-to-right" evidence="31">
        <dbReference type="Rhea" id="RHEA:19122"/>
    </physiologicalReaction>
</comment>
<comment type="catalytic activity">
    <reaction evidence="6 19">
        <text>17beta-estradiol 17-O-(beta-D-glucuronate)(in) + ATP + H2O = 17beta-estradiol 17-O-(beta-D-glucuronate)(out) + ADP + phosphate + H(+)</text>
        <dbReference type="Rhea" id="RHEA:60128"/>
        <dbReference type="ChEBI" id="CHEBI:15377"/>
        <dbReference type="ChEBI" id="CHEBI:15378"/>
        <dbReference type="ChEBI" id="CHEBI:30616"/>
        <dbReference type="ChEBI" id="CHEBI:43474"/>
        <dbReference type="ChEBI" id="CHEBI:82961"/>
        <dbReference type="ChEBI" id="CHEBI:456216"/>
    </reaction>
    <physiologicalReaction direction="left-to-right" evidence="26 32">
        <dbReference type="Rhea" id="RHEA:60129"/>
    </physiologicalReaction>
</comment>
<comment type="catalytic activity">
    <reaction evidence="8">
        <text>dehydroepiandrosterone 3-sulfate(in) + ATP + H2O = dehydroepiandrosterone 3-sulfate(out) + ADP + phosphate + H(+)</text>
        <dbReference type="Rhea" id="RHEA:61364"/>
        <dbReference type="ChEBI" id="CHEBI:15377"/>
        <dbReference type="ChEBI" id="CHEBI:15378"/>
        <dbReference type="ChEBI" id="CHEBI:30616"/>
        <dbReference type="ChEBI" id="CHEBI:43474"/>
        <dbReference type="ChEBI" id="CHEBI:57905"/>
        <dbReference type="ChEBI" id="CHEBI:456216"/>
    </reaction>
    <physiologicalReaction direction="left-to-right" evidence="27">
        <dbReference type="Rhea" id="RHEA:61365"/>
    </physiologicalReaction>
</comment>
<comment type="catalytic activity">
    <reaction evidence="15">
        <text>leukotriene C4(in) + ATP + H2O = leukotriene C4(out) + ADP + phosphate + H(+)</text>
        <dbReference type="Rhea" id="RHEA:38963"/>
        <dbReference type="ChEBI" id="CHEBI:15377"/>
        <dbReference type="ChEBI" id="CHEBI:15378"/>
        <dbReference type="ChEBI" id="CHEBI:30616"/>
        <dbReference type="ChEBI" id="CHEBI:43474"/>
        <dbReference type="ChEBI" id="CHEBI:57973"/>
        <dbReference type="ChEBI" id="CHEBI:456216"/>
    </reaction>
    <physiologicalReaction direction="left-to-right" evidence="31">
        <dbReference type="Rhea" id="RHEA:38964"/>
    </physiologicalReaction>
</comment>
<comment type="catalytic activity">
    <reaction evidence="15">
        <text>leukotriene B4(in) + ATP + H2O = leukotriene B4(out) + ADP + phosphate + H(+)</text>
        <dbReference type="Rhea" id="RHEA:66424"/>
        <dbReference type="ChEBI" id="CHEBI:15377"/>
        <dbReference type="ChEBI" id="CHEBI:15378"/>
        <dbReference type="ChEBI" id="CHEBI:30616"/>
        <dbReference type="ChEBI" id="CHEBI:43474"/>
        <dbReference type="ChEBI" id="CHEBI:57461"/>
        <dbReference type="ChEBI" id="CHEBI:456216"/>
    </reaction>
</comment>
<comment type="catalytic activity">
    <reaction evidence="12">
        <text>urate(in) + ATP + H2O = urate(out) + ADP + phosphate + H(+)</text>
        <dbReference type="Rhea" id="RHEA:16461"/>
        <dbReference type="ChEBI" id="CHEBI:15377"/>
        <dbReference type="ChEBI" id="CHEBI:15378"/>
        <dbReference type="ChEBI" id="CHEBI:17775"/>
        <dbReference type="ChEBI" id="CHEBI:30616"/>
        <dbReference type="ChEBI" id="CHEBI:43474"/>
        <dbReference type="ChEBI" id="CHEBI:456216"/>
    </reaction>
    <physiologicalReaction direction="left-to-right" evidence="29">
        <dbReference type="Rhea" id="RHEA:16462"/>
    </physiologicalReaction>
</comment>
<comment type="catalytic activity">
    <reaction evidence="6 12">
        <text>3',5'-cyclic GMP(in) + ATP + H2O = 3',5'-cyclic GMP(out) + ADP + phosphate + H(+)</text>
        <dbReference type="Rhea" id="RHEA:66188"/>
        <dbReference type="ChEBI" id="CHEBI:15377"/>
        <dbReference type="ChEBI" id="CHEBI:15378"/>
        <dbReference type="ChEBI" id="CHEBI:30616"/>
        <dbReference type="ChEBI" id="CHEBI:43474"/>
        <dbReference type="ChEBI" id="CHEBI:57746"/>
        <dbReference type="ChEBI" id="CHEBI:456216"/>
    </reaction>
    <physiologicalReaction direction="left-to-right" evidence="29">
        <dbReference type="Rhea" id="RHEA:66189"/>
    </physiologicalReaction>
</comment>
<comment type="catalytic activity">
    <reaction evidence="6">
        <text>3',5'-cyclic AMP(in) + ATP + H2O = 3',5'-cyclic AMP(out) + ADP + phosphate + H(+)</text>
        <dbReference type="Rhea" id="RHEA:66184"/>
        <dbReference type="ChEBI" id="CHEBI:15377"/>
        <dbReference type="ChEBI" id="CHEBI:15378"/>
        <dbReference type="ChEBI" id="CHEBI:30616"/>
        <dbReference type="ChEBI" id="CHEBI:43474"/>
        <dbReference type="ChEBI" id="CHEBI:58165"/>
        <dbReference type="ChEBI" id="CHEBI:456216"/>
    </reaction>
    <physiologicalReaction direction="left-to-right" evidence="26">
        <dbReference type="Rhea" id="RHEA:66185"/>
    </physiologicalReaction>
</comment>
<comment type="catalytic activity">
    <reaction evidence="9 11 19">
        <text>prostaglandin E2(in) + ATP + H2O = prostaglandin E2(out) + ADP + phosphate + H(+)</text>
        <dbReference type="Rhea" id="RHEA:66388"/>
        <dbReference type="ChEBI" id="CHEBI:15377"/>
        <dbReference type="ChEBI" id="CHEBI:15378"/>
        <dbReference type="ChEBI" id="CHEBI:30616"/>
        <dbReference type="ChEBI" id="CHEBI:43474"/>
        <dbReference type="ChEBI" id="CHEBI:456216"/>
        <dbReference type="ChEBI" id="CHEBI:606564"/>
    </reaction>
    <physiologicalReaction direction="left-to-right" evidence="28 32">
        <dbReference type="Rhea" id="RHEA:66389"/>
    </physiologicalReaction>
</comment>
<comment type="catalytic activity">
    <reaction evidence="9 11">
        <text>prostaglandin E1(in) + ATP + H2O = prostaglandin E1(out) + ADP + phosphate + H(+)</text>
        <dbReference type="Rhea" id="RHEA:66392"/>
        <dbReference type="ChEBI" id="CHEBI:15377"/>
        <dbReference type="ChEBI" id="CHEBI:15378"/>
        <dbReference type="ChEBI" id="CHEBI:30616"/>
        <dbReference type="ChEBI" id="CHEBI:43474"/>
        <dbReference type="ChEBI" id="CHEBI:57397"/>
        <dbReference type="ChEBI" id="CHEBI:456216"/>
    </reaction>
    <physiologicalReaction direction="left-to-right" evidence="28">
        <dbReference type="Rhea" id="RHEA:66393"/>
    </physiologicalReaction>
</comment>
<comment type="catalytic activity">
    <reaction evidence="13">
        <text>glycodeoxycholate(in) + glutathione(in) + ATP + H2O = glycodeoxycholate(out) + glutathione(out) + ADP + phosphate + H(+)</text>
        <dbReference type="Rhea" id="RHEA:66380"/>
        <dbReference type="ChEBI" id="CHEBI:15377"/>
        <dbReference type="ChEBI" id="CHEBI:15378"/>
        <dbReference type="ChEBI" id="CHEBI:30616"/>
        <dbReference type="ChEBI" id="CHEBI:43474"/>
        <dbReference type="ChEBI" id="CHEBI:57925"/>
        <dbReference type="ChEBI" id="CHEBI:82982"/>
        <dbReference type="ChEBI" id="CHEBI:456216"/>
    </reaction>
    <physiologicalReaction direction="left-to-right" evidence="30">
        <dbReference type="Rhea" id="RHEA:66381"/>
    </physiologicalReaction>
</comment>
<comment type="catalytic activity">
    <reaction evidence="13">
        <text>cholate(in) + glutathione(in) + ATP + H2O = cholate(out) + glutathione(out) + ADP + phosphate + H(+)</text>
        <dbReference type="Rhea" id="RHEA:66396"/>
        <dbReference type="ChEBI" id="CHEBI:15377"/>
        <dbReference type="ChEBI" id="CHEBI:15378"/>
        <dbReference type="ChEBI" id="CHEBI:29747"/>
        <dbReference type="ChEBI" id="CHEBI:30616"/>
        <dbReference type="ChEBI" id="CHEBI:43474"/>
        <dbReference type="ChEBI" id="CHEBI:57925"/>
        <dbReference type="ChEBI" id="CHEBI:456216"/>
    </reaction>
    <physiologicalReaction direction="left-to-right" evidence="30">
        <dbReference type="Rhea" id="RHEA:66397"/>
    </physiologicalReaction>
</comment>
<comment type="catalytic activity">
    <reaction evidence="13">
        <text>glycocholate(in) + glutathione(in) + ATP + H2O = glycocholate(out) + glutathione(out) + ADP + phosphate + H(+)</text>
        <dbReference type="Rhea" id="RHEA:66400"/>
        <dbReference type="ChEBI" id="CHEBI:15377"/>
        <dbReference type="ChEBI" id="CHEBI:15378"/>
        <dbReference type="ChEBI" id="CHEBI:29746"/>
        <dbReference type="ChEBI" id="CHEBI:30616"/>
        <dbReference type="ChEBI" id="CHEBI:43474"/>
        <dbReference type="ChEBI" id="CHEBI:57925"/>
        <dbReference type="ChEBI" id="CHEBI:456216"/>
    </reaction>
    <physiologicalReaction direction="left-to-right" evidence="30">
        <dbReference type="Rhea" id="RHEA:66401"/>
    </physiologicalReaction>
</comment>
<comment type="catalytic activity">
    <reaction evidence="13">
        <text>taurocholate(in) + glutathione(in) + ATP + H2O = taurocholate(out) + glutathione(out) + ADP + phosphate + H(+)</text>
        <dbReference type="Rhea" id="RHEA:66404"/>
        <dbReference type="ChEBI" id="CHEBI:15377"/>
        <dbReference type="ChEBI" id="CHEBI:15378"/>
        <dbReference type="ChEBI" id="CHEBI:30616"/>
        <dbReference type="ChEBI" id="CHEBI:36257"/>
        <dbReference type="ChEBI" id="CHEBI:43474"/>
        <dbReference type="ChEBI" id="CHEBI:57925"/>
        <dbReference type="ChEBI" id="CHEBI:456216"/>
    </reaction>
    <physiologicalReaction direction="left-to-right" evidence="30">
        <dbReference type="Rhea" id="RHEA:66405"/>
    </physiologicalReaction>
</comment>
<comment type="catalytic activity">
    <reaction evidence="13">
        <text>glycochenodeoxycholate(in) + glutathione(in) + ATP + H2O = glycochenodeoxycholate(out) + glutathione(out) + ADP + phosphate + H(+)</text>
        <dbReference type="Rhea" id="RHEA:66408"/>
        <dbReference type="ChEBI" id="CHEBI:15377"/>
        <dbReference type="ChEBI" id="CHEBI:15378"/>
        <dbReference type="ChEBI" id="CHEBI:30616"/>
        <dbReference type="ChEBI" id="CHEBI:36252"/>
        <dbReference type="ChEBI" id="CHEBI:43474"/>
        <dbReference type="ChEBI" id="CHEBI:57925"/>
        <dbReference type="ChEBI" id="CHEBI:456216"/>
    </reaction>
    <physiologicalReaction direction="left-to-right" evidence="30">
        <dbReference type="Rhea" id="RHEA:66409"/>
    </physiologicalReaction>
</comment>
<comment type="catalytic activity">
    <reaction evidence="13">
        <text>taurochenodeoxycholate(in) + glutathione(in) + ATP + H2O = taurochenodeoxycholate(out) + glutathione(out) + ADP + phosphate + H(+)</text>
        <dbReference type="Rhea" id="RHEA:66412"/>
        <dbReference type="ChEBI" id="CHEBI:9407"/>
        <dbReference type="ChEBI" id="CHEBI:15377"/>
        <dbReference type="ChEBI" id="CHEBI:15378"/>
        <dbReference type="ChEBI" id="CHEBI:30616"/>
        <dbReference type="ChEBI" id="CHEBI:43474"/>
        <dbReference type="ChEBI" id="CHEBI:57925"/>
        <dbReference type="ChEBI" id="CHEBI:456216"/>
    </reaction>
    <physiologicalReaction direction="left-to-right" evidence="30">
        <dbReference type="Rhea" id="RHEA:66413"/>
    </physiologicalReaction>
</comment>
<comment type="catalytic activity">
    <reaction evidence="13">
        <text>glycoursodeoxycholate(in) + glutathione(in) + ATP + H2O = glycoursodeoxycholate(out) + glutathione(out) + ADP + phosphate + H(+)</text>
        <dbReference type="Rhea" id="RHEA:66416"/>
        <dbReference type="ChEBI" id="CHEBI:15377"/>
        <dbReference type="ChEBI" id="CHEBI:15378"/>
        <dbReference type="ChEBI" id="CHEBI:30616"/>
        <dbReference type="ChEBI" id="CHEBI:43474"/>
        <dbReference type="ChEBI" id="CHEBI:57925"/>
        <dbReference type="ChEBI" id="CHEBI:132030"/>
        <dbReference type="ChEBI" id="CHEBI:456216"/>
    </reaction>
    <physiologicalReaction direction="left-to-right" evidence="30">
        <dbReference type="Rhea" id="RHEA:66417"/>
    </physiologicalReaction>
</comment>
<comment type="catalytic activity">
    <reaction evidence="13">
        <text>tauroursodeoxycholate(in) + glutathione(in) + ATP + H2O = tauroursodeoxycholate(out) + glutathione(out) + ADP + phosphate + H(+)</text>
        <dbReference type="Rhea" id="RHEA:66420"/>
        <dbReference type="ChEBI" id="CHEBI:15377"/>
        <dbReference type="ChEBI" id="CHEBI:15378"/>
        <dbReference type="ChEBI" id="CHEBI:30616"/>
        <dbReference type="ChEBI" id="CHEBI:43474"/>
        <dbReference type="ChEBI" id="CHEBI:57925"/>
        <dbReference type="ChEBI" id="CHEBI:132028"/>
        <dbReference type="ChEBI" id="CHEBI:456216"/>
    </reaction>
    <physiologicalReaction direction="left-to-right" evidence="30">
        <dbReference type="Rhea" id="RHEA:66421"/>
    </physiologicalReaction>
</comment>
<comment type="cofactor">
    <cofactor evidence="11">
        <name>Mg(2+)</name>
        <dbReference type="ChEBI" id="CHEBI:18420"/>
    </cofactor>
</comment>
<comment type="activity regulation">
    <text evidence="9 12 15">GSH stimulates the transport of MRP4 (PubMed:17959747). Urate inhibits methotrexate transport but stimulates cGMP transport (PubMed:15454390). Nonsteroidal anti-inflammatory drugs (NSAIDs) strongly suppress the transport of MRP4 substrates (PubMed:12835412).</text>
</comment>
<comment type="biophysicochemical properties">
    <kinetics>
        <KM evidence="9">2.1 uM for prostaglandin E1</KM>
        <KM evidence="9">3.4 uM for prostaglandin E2</KM>
        <KM evidence="13">25.8 uM for cholylglycine (in the presence of 5 mM GSH)</KM>
        <KM evidence="13">7.7 uM for cholyltaurine (in the presence of 5 mM GSH)</KM>
        <KM evidence="13">6.7 uM for deoxycholylglycine (in the presence of 5 mM GSH)</KM>
        <KM evidence="13">5.9 uM for chenodeoxycholylglycine (in the presence of 5 mM GSH)</KM>
        <KM evidence="13">3.6 uM for chenodeoxycholyltaurine (in the presence of 5 mM GSH)</KM>
        <KM evidence="13">12.5 uM for ursodeoxycholylglycine (in the presence of 5 mM GSH)</KM>
        <KM evidence="13">7.8 uM for ursodeoxycholyltaurine (in the presence of 5 mM GSH)</KM>
        <KM evidence="13">14.8 uM for cholate (in the presence of 5 mM GSH)</KM>
        <KM evidence="12">1500 uM for urate</KM>
        <KM evidence="12">180 uM for cGMP</KM>
        <KM evidence="11">0.62 uM for ATP</KM>
        <KM evidence="15">0.13 uM for LTC4</KM>
        <KM evidence="6">1.3 uM for methotrexate</KM>
        <KM evidence="15">5.2 uM for LTB4 (in the presence of 5 mM GSH)</KM>
        <KM evidence="8">2 uM for 3beta-sulfooxy-androst-5-en-17-one</KM>
        <Vmax evidence="6">430.0 pmol/min/mg enzyme for methotrexate transport</Vmax>
        <Vmax evidence="12">47.0 pmol/min/mg enzyme for urate transport</Vmax>
        <Vmax evidence="13">75.0 pmol/min/mg enzyme for cholate transport (in the presence of 5 mM GSH)</Vmax>
        <Vmax evidence="13">175.0 pmol/min/mg enzyme for cholylglycine transport (in the presence of 5 mM GSH)</Vmax>
        <Vmax evidence="13">154.0 pmol/min/mg enzyme for cholyltaurine transport (in the presence of 5 mM GSH)</Vmax>
        <Vmax evidence="13">93.0 pmol/min/mg enzyme for chenodeoxycholylglycine transport (in the presence of 5 mM GSH)</Vmax>
        <Vmax evidence="13">83.0 pmol/min/mg enzyme for chenodeoxycholyltaurine transport (in the presence of 5 mM GSH)</Vmax>
        <Vmax evidence="13">130.0 pmol/min/mg enzyme for ursodeoxycholylglycine (in the presence of 5 mM GSH)</Vmax>
        <Vmax evidence="13">133.0 pmol/min/mg enzyme for ursodeoxycholyltaurine (in the presence of 5 mM GSH)</Vmax>
        <Vmax evidence="8">45.0 pmol/min/mg enzyme for 3beta-sulfooxy-androst-5-en-17-one transport</Vmax>
    </kinetics>
</comment>
<comment type="subunit">
    <text evidence="18">Interacts (via PDZ-binding motif) with SNX27 (via PDZ domain); this interaction accelerates MRP4 internalization.</text>
</comment>
<comment type="interaction">
    <interactant intactId="EBI-4319622">
        <id>O15439</id>
    </interactant>
    <interactant intactId="EBI-711788">
        <id>Q00013</id>
        <label>MPP1</label>
    </interactant>
    <organismsDiffer>false</organismsDiffer>
    <experiments>10</experiments>
</comment>
<comment type="subcellular location">
    <subcellularLocation>
        <location evidence="5 10 19">Basolateral cell membrane</location>
        <topology evidence="1">Multi-pass membrane protein</topology>
    </subcellularLocation>
    <subcellularLocation>
        <location evidence="6 19">Apical cell membrane</location>
        <topology evidence="1">Multi-pass membrane protein</topology>
    </subcellularLocation>
    <text evidence="32">Its localization to the basolateral or apical membranes is tissue-dependent.</text>
</comment>
<comment type="alternative products">
    <event type="alternative splicing"/>
    <isoform>
        <id>O15439-1</id>
        <name>1</name>
        <sequence type="displayed"/>
    </isoform>
    <isoform>
        <id>O15439-2</id>
        <name>2</name>
        <sequence type="described" ref="VSP_035426"/>
    </isoform>
    <isoform>
        <id>O15439-3</id>
        <name>3</name>
        <sequence type="described" ref="VSP_043283 VSP_043284"/>
    </isoform>
    <isoform>
        <id>O15439-4</id>
        <name>4</name>
        <sequence type="described" ref="VSP_057413 VSP_043283 VSP_043284"/>
    </isoform>
</comment>
<comment type="tissue specificity">
    <text>Widely expressed, with particularly high levels in prostate, but is barely detectable in liver. sinusoidal membrane of hepatocytes.</text>
</comment>
<comment type="PTM">
    <text evidence="19">N-glycosylated; leading to substrate-selective effects on its transport activity.</text>
</comment>
<comment type="similarity">
    <text evidence="25">Belongs to the ABC transporter superfamily. ABCC family. Conjugate transporter (TC 3.A.1.208) subfamily.</text>
</comment>
<comment type="online information" name="ABCMdb">
    <link uri="http://abcm2.hegelab.org/search"/>
    <text>Database for mutations in ABC proteins</text>
</comment>
<organism>
    <name type="scientific">Homo sapiens</name>
    <name type="common">Human</name>
    <dbReference type="NCBI Taxonomy" id="9606"/>
    <lineage>
        <taxon>Eukaryota</taxon>
        <taxon>Metazoa</taxon>
        <taxon>Chordata</taxon>
        <taxon>Craniata</taxon>
        <taxon>Vertebrata</taxon>
        <taxon>Euteleostomi</taxon>
        <taxon>Mammalia</taxon>
        <taxon>Eutheria</taxon>
        <taxon>Euarchontoglires</taxon>
        <taxon>Primates</taxon>
        <taxon>Haplorrhini</taxon>
        <taxon>Catarrhini</taxon>
        <taxon>Hominidae</taxon>
        <taxon>Homo</taxon>
    </lineage>
</organism>
<gene>
    <name type="primary">ABCC4</name>
    <name type="synonym">MOATB</name>
    <name type="synonym">MRP4</name>
</gene>
<proteinExistence type="evidence at protein level"/>
<feature type="chain" id="PRO_0000093362" description="ATP-binding cassette sub-family C member 4">
    <location>
        <begin position="1"/>
        <end position="1325"/>
    </location>
</feature>
<feature type="transmembrane region" description="Helical" evidence="3">
    <location>
        <begin position="93"/>
        <end position="113"/>
    </location>
</feature>
<feature type="transmembrane region" description="Helical" evidence="3">
    <location>
        <begin position="136"/>
        <end position="156"/>
    </location>
</feature>
<feature type="transmembrane region" description="Helical" evidence="3">
    <location>
        <begin position="207"/>
        <end position="227"/>
    </location>
</feature>
<feature type="transmembrane region" description="Helical" evidence="3">
    <location>
        <begin position="228"/>
        <end position="248"/>
    </location>
</feature>
<feature type="transmembrane region" description="Helical" evidence="3">
    <location>
        <begin position="328"/>
        <end position="348"/>
    </location>
</feature>
<feature type="transmembrane region" description="Helical" evidence="3">
    <location>
        <begin position="351"/>
        <end position="371"/>
    </location>
</feature>
<feature type="transmembrane region" description="Helical" evidence="3">
    <location>
        <begin position="440"/>
        <end position="460"/>
    </location>
</feature>
<feature type="transmembrane region" description="Helical" evidence="3">
    <location>
        <begin position="710"/>
        <end position="730"/>
    </location>
</feature>
<feature type="transmembrane region" description="Helical" evidence="3">
    <location>
        <begin position="771"/>
        <end position="791"/>
    </location>
</feature>
<feature type="transmembrane region" description="Helical" evidence="3">
    <location>
        <begin position="836"/>
        <end position="856"/>
    </location>
</feature>
<feature type="transmembrane region" description="Helical" evidence="3">
    <location>
        <begin position="858"/>
        <end position="878"/>
    </location>
</feature>
<feature type="transmembrane region" description="Helical" evidence="3">
    <location>
        <begin position="954"/>
        <end position="974"/>
    </location>
</feature>
<feature type="transmembrane region" description="Helical" evidence="3">
    <location>
        <begin position="977"/>
        <end position="997"/>
    </location>
</feature>
<feature type="transmembrane region" description="Helical" evidence="3">
    <location>
        <begin position="1038"/>
        <end position="1058"/>
    </location>
</feature>
<feature type="domain" description="ABC transmembrane type-1 1" evidence="3">
    <location>
        <begin position="92"/>
        <end position="377"/>
    </location>
</feature>
<feature type="domain" description="ABC transporter 1" evidence="2">
    <location>
        <begin position="410"/>
        <end position="633"/>
    </location>
</feature>
<feature type="domain" description="ABC transmembrane type-1 2" evidence="3">
    <location>
        <begin position="714"/>
        <end position="1005"/>
    </location>
</feature>
<feature type="domain" description="ABC transporter 2" evidence="2">
    <location>
        <begin position="1041"/>
        <end position="1274"/>
    </location>
</feature>
<feature type="region of interest" description="Disordered" evidence="4">
    <location>
        <begin position="657"/>
        <end position="688"/>
    </location>
</feature>
<feature type="short sequence motif" description="PDZ-binding">
    <location>
        <begin position="1322"/>
        <end position="1325"/>
    </location>
</feature>
<feature type="compositionally biased region" description="Low complexity" evidence="4">
    <location>
        <begin position="657"/>
        <end position="667"/>
    </location>
</feature>
<feature type="binding site" evidence="2">
    <location>
        <begin position="445"/>
        <end position="452"/>
    </location>
    <ligand>
        <name>ATP</name>
        <dbReference type="ChEBI" id="CHEBI:30616"/>
        <label>1</label>
    </ligand>
</feature>
<feature type="binding site" evidence="2">
    <location>
        <begin position="1075"/>
        <end position="1082"/>
    </location>
    <ligand>
        <name>ATP</name>
        <dbReference type="ChEBI" id="CHEBI:30616"/>
        <label>2</label>
    </ligand>
</feature>
<feature type="modified residue" description="Phosphothreonine" evidence="33 34 35 36">
    <location>
        <position position="646"/>
    </location>
</feature>
<feature type="modified residue" description="Phosphothreonine" evidence="36">
    <location>
        <position position="648"/>
    </location>
</feature>
<feature type="modified residue" description="Phosphoserine" evidence="36">
    <location>
        <position position="664"/>
    </location>
</feature>
<feature type="modified residue" description="Phosphoserine" evidence="36">
    <location>
        <position position="668"/>
    </location>
</feature>
<feature type="glycosylation site" description="N-linked (GlcNAc...) asparagine" evidence="19">
    <location>
        <position position="746"/>
    </location>
</feature>
<feature type="glycosylation site" description="N-linked (GlcNAc...) asparagine" evidence="19">
    <location>
        <position position="754"/>
    </location>
</feature>
<feature type="splice variant" id="VSP_057413" description="In isoform 4." evidence="21">
    <location>
        <begin position="103"/>
        <end position="177"/>
    </location>
</feature>
<feature type="splice variant" id="VSP_035426" description="In isoform 2." evidence="24">
    <location>
        <begin position="679"/>
        <end position="725"/>
    </location>
</feature>
<feature type="splice variant" id="VSP_043283" description="In isoform 3 and isoform 4." evidence="21 22">
    <original>TLLQVVGVVSVAVA</original>
    <variation>RWDLAVLSWLVSNS</variation>
    <location>
        <begin position="846"/>
        <end position="859"/>
    </location>
</feature>
<feature type="splice variant" id="VSP_043284" description="In isoform 3 and isoform 4." evidence="21 22">
    <location>
        <begin position="860"/>
        <end position="1325"/>
    </location>
</feature>
<feature type="sequence variant" id="VAR_046445" description="In dbSNP:rs11568681." evidence="7 20">
    <original>L</original>
    <variation>I</variation>
    <location>
        <position position="18"/>
    </location>
</feature>
<feature type="sequence variant" id="VAR_029121" description="In dbSNP:rs11568689.">
    <original>P</original>
    <variation>A</variation>
    <location>
        <position position="78"/>
    </location>
</feature>
<feature type="sequence variant" id="VAR_046446" description="In dbSNP:rs4148460.">
    <original>C</original>
    <variation>G</variation>
    <location>
        <position position="171"/>
    </location>
</feature>
<feature type="sequence variant" id="VAR_020241" description="In dbSNP:rs45454092.">
    <original>M</original>
    <variation>T</variation>
    <location>
        <position position="184"/>
    </location>
</feature>
<feature type="sequence variant" id="VAR_020242" description="Transport properties comparable to wild-type; dbSNP:rs11568658." evidence="16">
    <original>G</original>
    <variation>W</variation>
    <location>
        <position position="187"/>
    </location>
</feature>
<feature type="sequence variant" id="VAR_046447" description="In dbSNP:rs11568684.">
    <original>K</original>
    <variation>E</variation>
    <location>
        <position position="293"/>
    </location>
</feature>
<feature type="sequence variant" id="VAR_022072" description="Transport properties comparable to wild-type; dbSNP:rs2274407." evidence="16">
    <original>K</original>
    <variation>N</variation>
    <location>
        <position position="304"/>
    </location>
</feature>
<feature type="sequence variant" id="VAR_046448" description="In dbSNP:rs11568701.">
    <original>T</original>
    <variation>M</variation>
    <location>
        <position position="356"/>
    </location>
</feature>
<feature type="sequence variant" id="VAR_029122" description="In dbSNP:rs11568705.">
    <original>P</original>
    <variation>L</variation>
    <location>
        <position position="403"/>
    </location>
</feature>
<feature type="sequence variant" id="VAR_029123" description="Transport properties comparable to wild-type; dbSNP:rs11568668." evidence="16">
    <original>G</original>
    <variation>E</variation>
    <location>
        <position position="487"/>
    </location>
</feature>
<feature type="sequence variant" id="VAR_020243" description="In dbSNP:rs11568669.">
    <original>K</original>
    <variation>E</variation>
    <location>
        <position position="498"/>
    </location>
</feature>
<feature type="sequence variant" id="VAR_045684" description="40% reduced expression level compared to wild-type; higher transport of 9-(2-phosphonyl-methoxyethyl) adenine than wild-type; dbSNP:rs753414892." evidence="16">
    <original>Y</original>
    <variation>C</variation>
    <location>
        <position position="556"/>
    </location>
</feature>
<feature type="sequence variant" id="VAR_029124" description="In dbSNP:rs11568699.">
    <original>I</original>
    <variation>M</variation>
    <location>
        <position position="625"/>
    </location>
</feature>
<feature type="sequence variant" id="VAR_029125" description="In dbSNP:rs11568697.">
    <original>P</original>
    <variation>L</variation>
    <location>
        <position position="667"/>
    </location>
</feature>
<feature type="sequence variant" id="VAR_020244" description="In dbSNP:rs9282570.">
    <original>M</original>
    <variation>V</variation>
    <location>
        <position position="744"/>
    </location>
</feature>
<feature type="sequence variant" id="VAR_022073" description="10% reduced expression level compared to wild-type; transport properties comparable to wild-type; dbSNP:rs3765534." evidence="16 17">
    <original>E</original>
    <variation>K</variation>
    <location>
        <position position="757"/>
    </location>
</feature>
<feature type="sequence variant" id="VAR_045685" description="20% reduced expression level compared to wild-type; significant lower activity in 6-mercaptopurine transport than wild-type; dbSNP:rs146708960." evidence="16">
    <original>V</original>
    <variation>I</variation>
    <location>
        <position position="776"/>
    </location>
</feature>
<feature type="sequence variant" id="VAR_045686" description="Transport properties comparable to wild-type; dbSNP:rs11568659." evidence="16">
    <original>R</original>
    <variation>I</variation>
    <location>
        <position position="820"/>
    </location>
</feature>
<feature type="sequence variant" id="VAR_045687" description="Transport properties comparable to wild-type; dbSNP:rs11568694." evidence="16">
    <original>V</original>
    <variation>F</variation>
    <location>
        <position position="854"/>
    </location>
</feature>
<feature type="sequence variant" id="VAR_020245" description="In dbSNP:rs45477596.">
    <original>V</original>
    <variation>M</variation>
    <location>
        <position position="860"/>
    </location>
</feature>
<feature type="sequence variant" id="VAR_045688" description="Transport properties comparable to wild-type; dbSNP:rs139970608." evidence="16">
    <original>I</original>
    <variation>V</variation>
    <location>
        <position position="866"/>
    </location>
</feature>
<feature type="sequence variant" id="VAR_020246" description="In dbSNP:rs45504892.">
    <original>V</original>
    <variation>L</variation>
    <location>
        <position position="900"/>
    </location>
</feature>
<feature type="sequence variant" id="VAR_029126" description="10% reduced expression level compared to wild-type; transport properties comparable to wild-type; dbSNP:rs11568644." evidence="16">
    <original>T</original>
    <variation>M</variation>
    <location>
        <position position="1142"/>
    </location>
</feature>
<feature type="mutagenesis site" description="Does not affect plasma membrane localization; 1.5 fold increase in PEG2 transport; does not affect estradiol 17-beta-D-glucuronide transport." evidence="19">
    <original>N</original>
    <variation>Q</variation>
    <location>
        <position position="746"/>
    </location>
</feature>
<feature type="mutagenesis site" description="Does not affect plasma membrane localization; PEG2 transport is decreased by 50%; does not affect estradiol 17-beta-D-glucuronide transport." evidence="19">
    <original>N</original>
    <variation>Q</variation>
    <location>
        <position position="754"/>
    </location>
</feature>
<feature type="sequence conflict" description="In Ref. 2; AAL88745." evidence="25" ref="2">
    <original>N</original>
    <variation>S</variation>
    <location>
        <position position="703"/>
    </location>
</feature>
<feature type="sequence conflict" description="In Ref. 2; AAL88745." evidence="25" ref="2">
    <original>E</original>
    <variation>G</variation>
    <location>
        <position position="757"/>
    </location>
</feature>
<feature type="sequence conflict" description="In Ref. 2; AAL88745." evidence="25" ref="2">
    <original>E</original>
    <variation>G</variation>
    <location>
        <position position="893"/>
    </location>
</feature>
<feature type="sequence conflict" description="In Ref. 1; AAC27076." evidence="25" ref="1">
    <original>N</original>
    <variation>K</variation>
    <location>
        <position position="1139"/>
    </location>
</feature>
<feature type="sequence conflict" description="In Ref. 8; AAB71757." evidence="25" ref="8">
    <original>H</original>
    <variation>D</variation>
    <location>
        <position position="1302"/>
    </location>
</feature>
<feature type="turn" evidence="42">
    <location>
        <begin position="12"/>
        <end position="15"/>
    </location>
</feature>
<feature type="helix" evidence="42">
    <location>
        <begin position="18"/>
        <end position="23"/>
    </location>
</feature>
<feature type="helix" evidence="42">
    <location>
        <begin position="25"/>
        <end position="27"/>
    </location>
</feature>
<feature type="helix" evidence="42">
    <location>
        <begin position="28"/>
        <end position="36"/>
    </location>
</feature>
<feature type="helix" evidence="39">
    <location>
        <begin position="41"/>
        <end position="43"/>
    </location>
</feature>
<feature type="helix" evidence="42">
    <location>
        <begin position="49"/>
        <end position="51"/>
    </location>
</feature>
<feature type="helix" evidence="42">
    <location>
        <begin position="53"/>
        <end position="74"/>
    </location>
</feature>
<feature type="helix" evidence="42">
    <location>
        <begin position="80"/>
        <end position="121"/>
    </location>
</feature>
<feature type="helix" evidence="42">
    <location>
        <begin position="128"/>
        <end position="150"/>
    </location>
</feature>
<feature type="helix" evidence="42">
    <location>
        <begin position="152"/>
        <end position="178"/>
    </location>
</feature>
<feature type="helix" evidence="42">
    <location>
        <begin position="183"/>
        <end position="188"/>
    </location>
</feature>
<feature type="helix" evidence="42">
    <location>
        <begin position="191"/>
        <end position="199"/>
    </location>
</feature>
<feature type="helix" evidence="37">
    <location>
        <begin position="202"/>
        <end position="204"/>
    </location>
</feature>
<feature type="helix" evidence="42">
    <location>
        <begin position="205"/>
        <end position="211"/>
    </location>
</feature>
<feature type="helix" evidence="42">
    <location>
        <begin position="214"/>
        <end position="233"/>
    </location>
</feature>
<feature type="helix" evidence="42">
    <location>
        <begin position="236"/>
        <end position="281"/>
    </location>
</feature>
<feature type="helix" evidence="42">
    <location>
        <begin position="283"/>
        <end position="289"/>
    </location>
</feature>
<feature type="helix" evidence="42">
    <location>
        <begin position="292"/>
        <end position="341"/>
    </location>
</feature>
<feature type="helix" evidence="42">
    <location>
        <begin position="348"/>
        <end position="390"/>
    </location>
</feature>
<feature type="strand" evidence="37">
    <location>
        <begin position="409"/>
        <end position="417"/>
    </location>
</feature>
<feature type="strand" evidence="38">
    <location>
        <begin position="423"/>
        <end position="425"/>
    </location>
</feature>
<feature type="strand" evidence="37">
    <location>
        <begin position="427"/>
        <end position="435"/>
    </location>
</feature>
<feature type="strand" evidence="42">
    <location>
        <begin position="440"/>
        <end position="444"/>
    </location>
</feature>
<feature type="helix" evidence="42">
    <location>
        <begin position="446"/>
        <end position="448"/>
    </location>
</feature>
<feature type="helix" evidence="42">
    <location>
        <begin position="451"/>
        <end position="456"/>
    </location>
</feature>
<feature type="turn" evidence="42">
    <location>
        <begin position="457"/>
        <end position="459"/>
    </location>
</feature>
<feature type="strand" evidence="37">
    <location>
        <begin position="465"/>
        <end position="473"/>
    </location>
</feature>
<feature type="strand" evidence="42">
    <location>
        <begin position="475"/>
        <end position="478"/>
    </location>
</feature>
<feature type="strand" evidence="42">
    <location>
        <begin position="486"/>
        <end position="488"/>
    </location>
</feature>
<feature type="helix" evidence="42">
    <location>
        <begin position="489"/>
        <end position="494"/>
    </location>
</feature>
<feature type="helix" evidence="42">
    <location>
        <begin position="501"/>
        <end position="510"/>
    </location>
</feature>
<feature type="helix" evidence="42">
    <location>
        <begin position="514"/>
        <end position="519"/>
    </location>
</feature>
<feature type="strand" evidence="42">
    <location>
        <begin position="520"/>
        <end position="522"/>
    </location>
</feature>
<feature type="helix" evidence="39">
    <location>
        <begin position="523"/>
        <end position="525"/>
    </location>
</feature>
<feature type="strand" evidence="37">
    <location>
        <begin position="527"/>
        <end position="529"/>
    </location>
</feature>
<feature type="helix" evidence="42">
    <location>
        <begin position="530"/>
        <end position="532"/>
    </location>
</feature>
<feature type="strand" evidence="41">
    <location>
        <begin position="533"/>
        <end position="535"/>
    </location>
</feature>
<feature type="helix" evidence="42">
    <location>
        <begin position="537"/>
        <end position="550"/>
    </location>
</feature>
<feature type="strand" evidence="42">
    <location>
        <begin position="554"/>
        <end position="560"/>
    </location>
</feature>
<feature type="turn" evidence="42">
    <location>
        <begin position="561"/>
        <end position="564"/>
    </location>
</feature>
<feature type="helix" evidence="42">
    <location>
        <begin position="567"/>
        <end position="576"/>
    </location>
</feature>
<feature type="turn" evidence="42">
    <location>
        <begin position="577"/>
        <end position="580"/>
    </location>
</feature>
<feature type="helix" evidence="42">
    <location>
        <begin position="581"/>
        <end position="583"/>
    </location>
</feature>
<feature type="strand" evidence="42">
    <location>
        <begin position="584"/>
        <end position="590"/>
    </location>
</feature>
<feature type="helix" evidence="42">
    <location>
        <begin position="595"/>
        <end position="599"/>
    </location>
</feature>
<feature type="strand" evidence="42">
    <location>
        <begin position="600"/>
        <end position="609"/>
    </location>
</feature>
<feature type="strand" evidence="42">
    <location>
        <begin position="611"/>
        <end position="613"/>
    </location>
</feature>
<feature type="helix" evidence="42">
    <location>
        <begin position="617"/>
        <end position="619"/>
    </location>
</feature>
<feature type="turn" evidence="39">
    <location>
        <begin position="622"/>
        <end position="624"/>
    </location>
</feature>
<feature type="turn" evidence="39">
    <location>
        <begin position="627"/>
        <end position="630"/>
    </location>
</feature>
<feature type="strand" evidence="38">
    <location>
        <begin position="693"/>
        <end position="695"/>
    </location>
</feature>
<feature type="helix" evidence="42">
    <location>
        <begin position="698"/>
        <end position="706"/>
    </location>
</feature>
<feature type="helix" evidence="42">
    <location>
        <begin position="711"/>
        <end position="750"/>
    </location>
</feature>
<feature type="turn" evidence="43">
    <location>
        <begin position="751"/>
        <end position="754"/>
    </location>
</feature>
<feature type="helix" evidence="42">
    <location>
        <begin position="761"/>
        <end position="806"/>
    </location>
</feature>
<feature type="helix" evidence="42">
    <location>
        <begin position="810"/>
        <end position="815"/>
    </location>
</feature>
<feature type="helix" evidence="42">
    <location>
        <begin position="818"/>
        <end position="860"/>
    </location>
</feature>
<feature type="helix" evidence="42">
    <location>
        <begin position="862"/>
        <end position="864"/>
    </location>
</feature>
<feature type="helix" evidence="42">
    <location>
        <begin position="865"/>
        <end position="895"/>
    </location>
</feature>
<feature type="helix" evidence="42">
    <location>
        <begin position="898"/>
        <end position="909"/>
    </location>
</feature>
<feature type="helix" evidence="42">
    <location>
        <begin position="911"/>
        <end position="916"/>
    </location>
</feature>
<feature type="turn" evidence="37">
    <location>
        <begin position="917"/>
        <end position="919"/>
    </location>
</feature>
<feature type="helix" evidence="42">
    <location>
        <begin position="920"/>
        <end position="969"/>
    </location>
</feature>
<feature type="helix" evidence="39">
    <location>
        <begin position="971"/>
        <end position="973"/>
    </location>
</feature>
<feature type="helix" evidence="42">
    <location>
        <begin position="976"/>
        <end position="1017"/>
    </location>
</feature>
<feature type="strand" evidence="39">
    <location>
        <begin position="1036"/>
        <end position="1038"/>
    </location>
</feature>
<feature type="strand" evidence="42">
    <location>
        <begin position="1042"/>
        <end position="1047"/>
    </location>
</feature>
<feature type="strand" evidence="42">
    <location>
        <begin position="1059"/>
        <end position="1064"/>
    </location>
</feature>
<feature type="strand" evidence="42">
    <location>
        <begin position="1071"/>
        <end position="1073"/>
    </location>
</feature>
<feature type="turn" evidence="44">
    <location>
        <begin position="1078"/>
        <end position="1080"/>
    </location>
</feature>
<feature type="helix" evidence="42">
    <location>
        <begin position="1081"/>
        <end position="1089"/>
    </location>
</feature>
<feature type="strand" evidence="39">
    <location>
        <begin position="1099"/>
        <end position="1102"/>
    </location>
</feature>
<feature type="helix" evidence="42">
    <location>
        <begin position="1105"/>
        <end position="1107"/>
    </location>
</feature>
<feature type="helix" evidence="42">
    <location>
        <begin position="1110"/>
        <end position="1114"/>
    </location>
</feature>
<feature type="strand" evidence="37">
    <location>
        <begin position="1117"/>
        <end position="1120"/>
    </location>
</feature>
<feature type="strand" evidence="37">
    <location>
        <begin position="1128"/>
        <end position="1130"/>
    </location>
</feature>
<feature type="helix" evidence="42">
    <location>
        <begin position="1131"/>
        <end position="1135"/>
    </location>
</feature>
<feature type="helix" evidence="42">
    <location>
        <begin position="1143"/>
        <end position="1152"/>
    </location>
</feature>
<feature type="helix" evidence="42">
    <location>
        <begin position="1156"/>
        <end position="1160"/>
    </location>
</feature>
<feature type="strand" evidence="38">
    <location>
        <begin position="1162"/>
        <end position="1164"/>
    </location>
</feature>
<feature type="helix" evidence="42">
    <location>
        <begin position="1165"/>
        <end position="1167"/>
    </location>
</feature>
<feature type="strand" evidence="42">
    <location>
        <begin position="1174"/>
        <end position="1177"/>
    </location>
</feature>
<feature type="helix" evidence="42">
    <location>
        <begin position="1179"/>
        <end position="1193"/>
    </location>
</feature>
<feature type="strand" evidence="42">
    <location>
        <begin position="1196"/>
        <end position="1202"/>
    </location>
</feature>
<feature type="strand" evidence="39">
    <location>
        <begin position="1204"/>
        <end position="1206"/>
    </location>
</feature>
<feature type="helix" evidence="42">
    <location>
        <begin position="1209"/>
        <end position="1221"/>
    </location>
</feature>
<feature type="strand" evidence="42">
    <location>
        <begin position="1224"/>
        <end position="1233"/>
    </location>
</feature>
<feature type="helix" evidence="42">
    <location>
        <begin position="1236"/>
        <end position="1239"/>
    </location>
</feature>
<feature type="strand" evidence="42">
    <location>
        <begin position="1241"/>
        <end position="1244"/>
    </location>
</feature>
<feature type="strand" evidence="39">
    <location>
        <begin position="1252"/>
        <end position="1256"/>
    </location>
</feature>
<feature type="helix" evidence="42">
    <location>
        <begin position="1258"/>
        <end position="1263"/>
    </location>
</feature>
<feature type="strand" evidence="39">
    <location>
        <begin position="1265"/>
        <end position="1267"/>
    </location>
</feature>
<feature type="helix" evidence="42">
    <location>
        <begin position="1268"/>
        <end position="1276"/>
    </location>
</feature>
<feature type="helix" evidence="39">
    <location>
        <begin position="1278"/>
        <end position="1296"/>
    </location>
</feature>
<feature type="turn" evidence="40">
    <location>
        <begin position="1298"/>
        <end position="1300"/>
    </location>
</feature>
<sequence length="1325" mass="149527">MLPVYQEVKPNPLQDANLCSRVFFWWLNPLFKIGHKRRLEEDDMYSVLPEDRSQHLGEELQGFWDKEVLRAENDAQKPSLTRAIIKCYWKSYLVLGIFTLIEESAKVIQPIFLGKIINYFENYDPMDSVALNTAYAYATVLTFCTLILAILHHLYFYHVQCAGMRLRVAMCHMIYRKALRLSNMAMGKTTTGQIVNLLSNDVNKFDQVTVFLHFLWAGPLQAIAVTALLWMEIGISCLAGMAVLIILLPLQSCFGKLFSSLRSKTATFTDARIRTMNEVITGIRIIKMYAWEKSFSNLITNLRKKEISKILRSSCLRGMNLASFFSASKIIVFVTFTTYVLLGSVITASRVFVAVTLYGAVRLTVTLFFPSAIERVSEAIVSIRRIQTFLLLDEISQRNRQLPSDGKKMVHVQDFTAFWDKASETPTLQGLSFTVRPGELLAVVGPVGAGKSSLLSAVLGELAPSHGLVSVHGRIAYVSQQPWVFSGTLRSNILFGKKYEKERYEKVIKACALKKDLQLLEDGDLTVIGDRGTTLSGGQKARVNLARAVYQDADIYLLDDPLSAVDAEVSRHLFELCICQILHEKITILVTHQLQYLKAASQILILKDGKMVQKGTYTEFLKSGIDFGSLLKKDNEESEQPPVPGTPTLRNRTFSESSVWSQQSSRPSLKDGALESQDTENVPVTLSEENRSEGKVGFQAYKNYFRAGAHWIVFIFLILLNTAAQVAYVLQDWWLSYWANKQSMLNVTVNGGGNVTEKLDLNWYLGIYSGLTVATVLFGIARSLLVFYVLVNSSQTLHNKMFESILKAPVLFFDRNPIGRILNRFSKDIGHLDDLLPLTFLDFIQTLLQVVGVVSVAVAVIPWIAIPLVPLGIIFIFLRRYFLETSRDVKRLESTTRSPVFSHLSSSLQGLWTIRAYKAEERCQELFDAHQDLHSEAWFLFLTTSRWFAVRLDAICAMFVIIVAFGSLILAKTLDAGQVGLALSYALTLMGMFQWCVRQSAEVENMMISVERVIEYTDLEKEAPWEYQKRPPPAWPHEGVIIFDNVNFMYSPGGPLVLKHLTALIKSQEKVGIVGRTGAGKSSLISALFRLSEPEGKIWIDKILTTEIGLHDLRKKMSIIPQEPVLFTGTMRKNLDPFNEHTDEELWNALQEVQLKETIEDLPGKMDTELAESGSNFSVGQRQLVCLARAILRKNQILIIDEATANVDPRTDELIQKKIREKFAHCTVLTIAHRLNTIIDSDKIMVLDSGRLKEYDEPYVLLQNKESLFYKMVQQLGKAEAAALTETAKQVYFKRNYPHIGHTDHMVTNTSNGQPSTLTIFETAL</sequence>
<name>MRP4_HUMAN</name>
<protein>
    <recommendedName>
        <fullName>ATP-binding cassette sub-family C member 4</fullName>
        <ecNumber evidence="6 8 9 10 11 12 13">7.6.2.-</ecNumber>
        <ecNumber evidence="6 7 12 14 16">7.6.2.2</ecNumber>
        <ecNumber evidence="6 15 19">7.6.2.3</ecNumber>
    </recommendedName>
    <alternativeName>
        <fullName>MRP/cMOAT-related ABC transporter</fullName>
    </alternativeName>
    <alternativeName>
        <fullName evidence="23">Multi-specific organic anion transporter B</fullName>
        <shortName evidence="23">MOAT-B</shortName>
    </alternativeName>
    <alternativeName>
        <fullName>Multidrug resistance-associated protein 4</fullName>
    </alternativeName>
</protein>
<reference key="1">
    <citation type="journal article" date="1998" name="Cancer Res.">
        <title>Isolation of MOAT-B, a widely expressed multidrug resistance-associated protein/canalicular multispecific organic anion transporter-related transporter.</title>
        <authorList>
            <person name="Lee K."/>
            <person name="Belinsky M.G."/>
            <person name="Bell D.W."/>
            <person name="Testa J.R."/>
            <person name="Kruh G.D."/>
        </authorList>
    </citation>
    <scope>NUCLEOTIDE SEQUENCE [MRNA] (ISOFORM 1)</scope>
    <scope>VARIANT ILE-18</scope>
</reference>
<reference key="2">
    <citation type="journal article" date="2002" name="J. Biol. Chem.">
        <title>Expression of MRP4 confers resistance to ganciclovir and compromises bystander cell killing.</title>
        <authorList>
            <person name="Adachi M."/>
            <person name="Sampath J."/>
            <person name="Lan L.B."/>
            <person name="Sun D."/>
            <person name="Hargrove P."/>
            <person name="Flatley R."/>
            <person name="Tatum A."/>
            <person name="Edwards M.Z."/>
            <person name="Wezeman M."/>
            <person name="Matherly L."/>
            <person name="Drake R."/>
            <person name="Schuetz J."/>
        </authorList>
    </citation>
    <scope>NUCLEOTIDE SEQUENCE [MRNA] (ISOFORM 1)</scope>
    <scope>VARIANT ILE-18</scope>
    <scope>CATALYTIC ACTIVITY</scope>
    <scope>FUNCTION</scope>
</reference>
<reference key="3">
    <citation type="submission" date="2002-12" db="EMBL/GenBank/DDBJ databases">
        <authorList>
            <person name="Kato R."/>
            <person name="Ishikawa T."/>
        </authorList>
    </citation>
    <scope>NUCLEOTIDE SEQUENCE [MRNA] (ISOFORMS 1 AND 2)</scope>
    <source>
        <tissue>Kidney</tissue>
    </source>
</reference>
<reference key="4">
    <citation type="journal article" date="2004" name="Nat. Genet.">
        <title>Complete sequencing and characterization of 21,243 full-length human cDNAs.</title>
        <authorList>
            <person name="Ota T."/>
            <person name="Suzuki Y."/>
            <person name="Nishikawa T."/>
            <person name="Otsuki T."/>
            <person name="Sugiyama T."/>
            <person name="Irie R."/>
            <person name="Wakamatsu A."/>
            <person name="Hayashi K."/>
            <person name="Sato H."/>
            <person name="Nagai K."/>
            <person name="Kimura K."/>
            <person name="Makita H."/>
            <person name="Sekine M."/>
            <person name="Obayashi M."/>
            <person name="Nishi T."/>
            <person name="Shibahara T."/>
            <person name="Tanaka T."/>
            <person name="Ishii S."/>
            <person name="Yamamoto J."/>
            <person name="Saito K."/>
            <person name="Kawai Y."/>
            <person name="Isono Y."/>
            <person name="Nakamura Y."/>
            <person name="Nagahari K."/>
            <person name="Murakami K."/>
            <person name="Yasuda T."/>
            <person name="Iwayanagi T."/>
            <person name="Wagatsuma M."/>
            <person name="Shiratori A."/>
            <person name="Sudo H."/>
            <person name="Hosoiri T."/>
            <person name="Kaku Y."/>
            <person name="Kodaira H."/>
            <person name="Kondo H."/>
            <person name="Sugawara M."/>
            <person name="Takahashi M."/>
            <person name="Kanda K."/>
            <person name="Yokoi T."/>
            <person name="Furuya T."/>
            <person name="Kikkawa E."/>
            <person name="Omura Y."/>
            <person name="Abe K."/>
            <person name="Kamihara K."/>
            <person name="Katsuta N."/>
            <person name="Sato K."/>
            <person name="Tanikawa M."/>
            <person name="Yamazaki M."/>
            <person name="Ninomiya K."/>
            <person name="Ishibashi T."/>
            <person name="Yamashita H."/>
            <person name="Murakawa K."/>
            <person name="Fujimori K."/>
            <person name="Tanai H."/>
            <person name="Kimata M."/>
            <person name="Watanabe M."/>
            <person name="Hiraoka S."/>
            <person name="Chiba Y."/>
            <person name="Ishida S."/>
            <person name="Ono Y."/>
            <person name="Takiguchi S."/>
            <person name="Watanabe S."/>
            <person name="Yosida M."/>
            <person name="Hotuta T."/>
            <person name="Kusano J."/>
            <person name="Kanehori K."/>
            <person name="Takahashi-Fujii A."/>
            <person name="Hara H."/>
            <person name="Tanase T.-O."/>
            <person name="Nomura Y."/>
            <person name="Togiya S."/>
            <person name="Komai F."/>
            <person name="Hara R."/>
            <person name="Takeuchi K."/>
            <person name="Arita M."/>
            <person name="Imose N."/>
            <person name="Musashino K."/>
            <person name="Yuuki H."/>
            <person name="Oshima A."/>
            <person name="Sasaki N."/>
            <person name="Aotsuka S."/>
            <person name="Yoshikawa Y."/>
            <person name="Matsunawa H."/>
            <person name="Ichihara T."/>
            <person name="Shiohata N."/>
            <person name="Sano S."/>
            <person name="Moriya S."/>
            <person name="Momiyama H."/>
            <person name="Satoh N."/>
            <person name="Takami S."/>
            <person name="Terashima Y."/>
            <person name="Suzuki O."/>
            <person name="Nakagawa S."/>
            <person name="Senoh A."/>
            <person name="Mizoguchi H."/>
            <person name="Goto Y."/>
            <person name="Shimizu F."/>
            <person name="Wakebe H."/>
            <person name="Hishigaki H."/>
            <person name="Watanabe T."/>
            <person name="Sugiyama A."/>
            <person name="Takemoto M."/>
            <person name="Kawakami B."/>
            <person name="Yamazaki M."/>
            <person name="Watanabe K."/>
            <person name="Kumagai A."/>
            <person name="Itakura S."/>
            <person name="Fukuzumi Y."/>
            <person name="Fujimori Y."/>
            <person name="Komiyama M."/>
            <person name="Tashiro H."/>
            <person name="Tanigami A."/>
            <person name="Fujiwara T."/>
            <person name="Ono T."/>
            <person name="Yamada K."/>
            <person name="Fujii Y."/>
            <person name="Ozaki K."/>
            <person name="Hirao M."/>
            <person name="Ohmori Y."/>
            <person name="Kawabata A."/>
            <person name="Hikiji T."/>
            <person name="Kobatake N."/>
            <person name="Inagaki H."/>
            <person name="Ikema Y."/>
            <person name="Okamoto S."/>
            <person name="Okitani R."/>
            <person name="Kawakami T."/>
            <person name="Noguchi S."/>
            <person name="Itoh T."/>
            <person name="Shigeta K."/>
            <person name="Senba T."/>
            <person name="Matsumura K."/>
            <person name="Nakajima Y."/>
            <person name="Mizuno T."/>
            <person name="Morinaga M."/>
            <person name="Sasaki M."/>
            <person name="Togashi T."/>
            <person name="Oyama M."/>
            <person name="Hata H."/>
            <person name="Watanabe M."/>
            <person name="Komatsu T."/>
            <person name="Mizushima-Sugano J."/>
            <person name="Satoh T."/>
            <person name="Shirai Y."/>
            <person name="Takahashi Y."/>
            <person name="Nakagawa K."/>
            <person name="Okumura K."/>
            <person name="Nagase T."/>
            <person name="Nomura N."/>
            <person name="Kikuchi H."/>
            <person name="Masuho Y."/>
            <person name="Yamashita R."/>
            <person name="Nakai K."/>
            <person name="Yada T."/>
            <person name="Nakamura Y."/>
            <person name="Ohara O."/>
            <person name="Isogai T."/>
            <person name="Sugano S."/>
        </authorList>
    </citation>
    <scope>NUCLEOTIDE SEQUENCE [LARGE SCALE MRNA] (ISOFORM 4)</scope>
    <source>
        <tissue>Thalamus</tissue>
    </source>
</reference>
<reference key="5">
    <citation type="journal article" date="2004" name="Nature">
        <title>The DNA sequence and analysis of human chromosome 13.</title>
        <authorList>
            <person name="Dunham A."/>
            <person name="Matthews L.H."/>
            <person name="Burton J."/>
            <person name="Ashurst J.L."/>
            <person name="Howe K.L."/>
            <person name="Ashcroft K.J."/>
            <person name="Beare D.M."/>
            <person name="Burford D.C."/>
            <person name="Hunt S.E."/>
            <person name="Griffiths-Jones S."/>
            <person name="Jones M.C."/>
            <person name="Keenan S.J."/>
            <person name="Oliver K."/>
            <person name="Scott C.E."/>
            <person name="Ainscough R."/>
            <person name="Almeida J.P."/>
            <person name="Ambrose K.D."/>
            <person name="Andrews D.T."/>
            <person name="Ashwell R.I.S."/>
            <person name="Babbage A.K."/>
            <person name="Bagguley C.L."/>
            <person name="Bailey J."/>
            <person name="Bannerjee R."/>
            <person name="Barlow K.F."/>
            <person name="Bates K."/>
            <person name="Beasley H."/>
            <person name="Bird C.P."/>
            <person name="Bray-Allen S."/>
            <person name="Brown A.J."/>
            <person name="Brown J.Y."/>
            <person name="Burrill W."/>
            <person name="Carder C."/>
            <person name="Carter N.P."/>
            <person name="Chapman J.C."/>
            <person name="Clamp M.E."/>
            <person name="Clark S.Y."/>
            <person name="Clarke G."/>
            <person name="Clee C.M."/>
            <person name="Clegg S.C."/>
            <person name="Cobley V."/>
            <person name="Collins J.E."/>
            <person name="Corby N."/>
            <person name="Coville G.J."/>
            <person name="Deloukas P."/>
            <person name="Dhami P."/>
            <person name="Dunham I."/>
            <person name="Dunn M."/>
            <person name="Earthrowl M.E."/>
            <person name="Ellington A.G."/>
            <person name="Faulkner L."/>
            <person name="Frankish A.G."/>
            <person name="Frankland J."/>
            <person name="French L."/>
            <person name="Garner P."/>
            <person name="Garnett J."/>
            <person name="Gilbert J.G.R."/>
            <person name="Gilson C.J."/>
            <person name="Ghori J."/>
            <person name="Grafham D.V."/>
            <person name="Gribble S.M."/>
            <person name="Griffiths C."/>
            <person name="Hall R.E."/>
            <person name="Hammond S."/>
            <person name="Harley J.L."/>
            <person name="Hart E.A."/>
            <person name="Heath P.D."/>
            <person name="Howden P.J."/>
            <person name="Huckle E.J."/>
            <person name="Hunt P.J."/>
            <person name="Hunt A.R."/>
            <person name="Johnson C."/>
            <person name="Johnson D."/>
            <person name="Kay M."/>
            <person name="Kimberley A.M."/>
            <person name="King A."/>
            <person name="Laird G.K."/>
            <person name="Langford C.J."/>
            <person name="Lawlor S."/>
            <person name="Leongamornlert D.A."/>
            <person name="Lloyd D.M."/>
            <person name="Lloyd C."/>
            <person name="Loveland J.E."/>
            <person name="Lovell J."/>
            <person name="Martin S."/>
            <person name="Mashreghi-Mohammadi M."/>
            <person name="McLaren S.J."/>
            <person name="McMurray A."/>
            <person name="Milne S."/>
            <person name="Moore M.J.F."/>
            <person name="Nickerson T."/>
            <person name="Palmer S.A."/>
            <person name="Pearce A.V."/>
            <person name="Peck A.I."/>
            <person name="Pelan S."/>
            <person name="Phillimore B."/>
            <person name="Porter K.M."/>
            <person name="Rice C.M."/>
            <person name="Searle S."/>
            <person name="Sehra H.K."/>
            <person name="Shownkeen R."/>
            <person name="Skuce C.D."/>
            <person name="Smith M."/>
            <person name="Steward C.A."/>
            <person name="Sycamore N."/>
            <person name="Tester J."/>
            <person name="Thomas D.W."/>
            <person name="Tracey A."/>
            <person name="Tromans A."/>
            <person name="Tubby B."/>
            <person name="Wall M."/>
            <person name="Wallis J.M."/>
            <person name="West A.P."/>
            <person name="Whitehead S.L."/>
            <person name="Willey D.L."/>
            <person name="Wilming L."/>
            <person name="Wray P.W."/>
            <person name="Wright M.W."/>
            <person name="Young L."/>
            <person name="Coulson A."/>
            <person name="Durbin R.M."/>
            <person name="Hubbard T."/>
            <person name="Sulston J.E."/>
            <person name="Beck S."/>
            <person name="Bentley D.R."/>
            <person name="Rogers J."/>
            <person name="Ross M.T."/>
        </authorList>
    </citation>
    <scope>NUCLEOTIDE SEQUENCE [LARGE SCALE GENOMIC DNA]</scope>
</reference>
<reference key="6">
    <citation type="submission" date="2005-07" db="EMBL/GenBank/DDBJ databases">
        <authorList>
            <person name="Mural R.J."/>
            <person name="Istrail S."/>
            <person name="Sutton G.G."/>
            <person name="Florea L."/>
            <person name="Halpern A.L."/>
            <person name="Mobarry C.M."/>
            <person name="Lippert R."/>
            <person name="Walenz B."/>
            <person name="Shatkay H."/>
            <person name="Dew I."/>
            <person name="Miller J.R."/>
            <person name="Flanigan M.J."/>
            <person name="Edwards N.J."/>
            <person name="Bolanos R."/>
            <person name="Fasulo D."/>
            <person name="Halldorsson B.V."/>
            <person name="Hannenhalli S."/>
            <person name="Turner R."/>
            <person name="Yooseph S."/>
            <person name="Lu F."/>
            <person name="Nusskern D.R."/>
            <person name="Shue B.C."/>
            <person name="Zheng X.H."/>
            <person name="Zhong F."/>
            <person name="Delcher A.L."/>
            <person name="Huson D.H."/>
            <person name="Kravitz S.A."/>
            <person name="Mouchard L."/>
            <person name="Reinert K."/>
            <person name="Remington K.A."/>
            <person name="Clark A.G."/>
            <person name="Waterman M.S."/>
            <person name="Eichler E.E."/>
            <person name="Adams M.D."/>
            <person name="Hunkapiller M.W."/>
            <person name="Myers E.W."/>
            <person name="Venter J.C."/>
        </authorList>
    </citation>
    <scope>NUCLEOTIDE SEQUENCE [LARGE SCALE GENOMIC DNA]</scope>
</reference>
<reference key="7">
    <citation type="journal article" date="2004" name="Genome Res.">
        <title>The status, quality, and expansion of the NIH full-length cDNA project: the Mammalian Gene Collection (MGC).</title>
        <authorList>
            <consortium name="The MGC Project Team"/>
        </authorList>
    </citation>
    <scope>NUCLEOTIDE SEQUENCE [LARGE SCALE MRNA] (ISOFORM 3)</scope>
    <source>
        <tissue>Brain</tissue>
    </source>
</reference>
<reference key="8">
    <citation type="journal article" date="1997" name="Cancer Res.">
        <title>Analysis of expression of cMOAT (MRP2), MRP3, MRP4, and MRP5, homologues of the multidrug resistance-associated protein gene (MRP1), in human cancer cell lines.</title>
        <authorList>
            <person name="Kool M."/>
            <person name="de Haas M."/>
            <person name="Scheffer G.L."/>
            <person name="Scheper R.J."/>
            <person name="van Eijk M.J."/>
            <person name="Juijn J.A."/>
            <person name="Baas F."/>
            <person name="Borst P."/>
        </authorList>
    </citation>
    <scope>NUCLEOTIDE SEQUENCE [MRNA] OF 1155-1316 (ISOFORMS 1/2)</scope>
    <source>
        <tissue>Brain</tissue>
    </source>
</reference>
<reference key="9">
    <citation type="journal article" date="2000" name="J. Natl. Cancer Inst.">
        <title>Analysis of the MRP4 drug resistance profile in transfected NIH3T3 cells.</title>
        <authorList>
            <person name="Lee K."/>
            <person name="Klein-Szanto A.J."/>
            <person name="Kruh G.D."/>
        </authorList>
    </citation>
    <scope>FUNCTION</scope>
    <scope>SUBCELLULAR LOCATION</scope>
</reference>
<reference key="10">
    <citation type="journal article" date="2002" name="J. Am. Soc. Nephrol.">
        <title>The MRP4/ABCC4 gene encodes a novel apical organic anion transporter in human kidney proximal tubules: putative efflux pump for urinary cAMP and cGMP.</title>
        <authorList>
            <person name="van Aubel R.A."/>
            <person name="Smeets P.H."/>
            <person name="Peters J.G."/>
            <person name="Bindels R.J."/>
            <person name="Russel F.G."/>
        </authorList>
    </citation>
    <scope>SUBCELLULAR LOCATION</scope>
    <scope>CATALYTIC ACTIVITY</scope>
    <scope>FUNCTION</scope>
    <scope>BIOPHYSICOCHEMICAL PROPERTIES</scope>
</reference>
<reference key="11">
    <citation type="journal article" date="2003" name="Hepatology">
        <title>Cotransport of reduced glutathione with bile salts by MRP4 (ABCC4) localized to the basolateral hepatocyte membrane.</title>
        <authorList>
            <person name="Rius M."/>
            <person name="Nies A.T."/>
            <person name="Hummel-Eisenbeiss J."/>
            <person name="Jedlitschky G."/>
            <person name="Keppler D."/>
        </authorList>
    </citation>
    <scope>CATALYTIC ACTIVITY</scope>
    <scope>FUNCTION</scope>
    <scope>SUBCELLULAR LOCATION</scope>
</reference>
<reference key="12">
    <citation type="journal article" date="2003" name="Biochem. J.">
        <title>Steroid and bile acid conjugates are substrates of human multidrug-resistance protein (MRP) 4 (ATP-binding cassette C4).</title>
        <authorList>
            <person name="Zelcer N."/>
            <person name="Reid G."/>
            <person name="Wielinga P."/>
            <person name="Kuil A."/>
            <person name="van der Heijden I."/>
            <person name="Schuetz J.D."/>
            <person name="Borst P."/>
        </authorList>
    </citation>
    <scope>FUNCTION</scope>
    <scope>CATALYTIC ACTIVITY</scope>
    <scope>BIOPHYSICOCHEMICAL PROPERTIES</scope>
</reference>
<reference key="13">
    <citation type="journal article" date="2003" name="Proc. Natl. Acad. Sci. U.S.A.">
        <title>The human multidrug resistance protein MRP4 functions as a prostaglandin efflux transporter and is inhibited by nonsteroidal antiinflammatory drugs.</title>
        <authorList>
            <person name="Reid G."/>
            <person name="Wielinga P."/>
            <person name="Zelcer N."/>
            <person name="van der Heijden I."/>
            <person name="Kuil A."/>
            <person name="de Haas M."/>
            <person name="Wijnholds J."/>
            <person name="Borst P."/>
        </authorList>
    </citation>
    <scope>FUNCTION</scope>
    <scope>CATALYTIC ACTIVITY</scope>
    <scope>BIOPHYSICOCHEMICAL PROPERTIES</scope>
    <scope>ACTIVITY REGULATION</scope>
</reference>
<reference key="14">
    <citation type="journal article" date="2004" name="J. Biol. Chem.">
        <title>Multidrug resistance protein 4 (ABCC4)-mediated ATP hydrolysis: effect of transport substrates and characterization of the post-hydrolysis transition state.</title>
        <authorList>
            <person name="Sauna Z.E."/>
            <person name="Nandigama K."/>
            <person name="Ambudkar S.V."/>
        </authorList>
    </citation>
    <scope>FUNCTION</scope>
    <scope>CATALYTIC ACTIVITY</scope>
    <scope>BIOPHYSICOCHEMICAL PROPERTIES</scope>
    <scope>COFACTOR</scope>
</reference>
<reference key="15">
    <citation type="journal article" date="2005" name="Am. J. Physiol.">
        <title>Human organic anion transporter MRP4 (ABCC4) is an efflux pump for the purine end metabolite urate with multiple allosteric substrate binding sites.</title>
        <authorList>
            <person name="Van Aubel R.A."/>
            <person name="Smeets P.H."/>
            <person name="van den Heuvel J.J."/>
            <person name="Russel F.G."/>
        </authorList>
    </citation>
    <scope>CATALYTIC ACTIVITY</scope>
    <scope>FUNCTION</scope>
    <scope>BIOPHYSICOCHEMICAL PROPERTIES</scope>
    <scope>ACTIVITY REGULATION</scope>
</reference>
<reference key="16">
    <citation type="journal article" date="2006" name="Am. J. Physiol.">
        <title>Substrate specificity of human ABCC4 (MRP4)-mediated cotransport of bile acids and reduced glutathione.</title>
        <authorList>
            <person name="Rius M."/>
            <person name="Hummel-Eisenbeiss J."/>
            <person name="Hofmann A.F."/>
            <person name="Keppler D."/>
        </authorList>
    </citation>
    <scope>FUNCTION</scope>
    <scope>CATALYTIC ACTIVITY</scope>
    <scope>BIOPHYSICOCHEMICAL PROPERTIES</scope>
</reference>
<reference key="17">
    <citation type="journal article" date="2007" name="Mol. Pharmacol.">
        <title>Involvement of MRP4 (ABCC4) in the luminal efflux of ceftizoxime and cefazolin in the kidney.</title>
        <authorList>
            <person name="Ci L."/>
            <person name="Kusuhara H."/>
            <person name="Adachi M."/>
            <person name="Schuetz J.D."/>
            <person name="Takeuchi K."/>
            <person name="Sugiyama Y."/>
        </authorList>
    </citation>
    <scope>FUNCTION</scope>
    <scope>CATALYTIC ACTIVITY</scope>
</reference>
<reference key="18">
    <citation type="journal article" date="2008" name="J. Pharmacol. Exp. Ther.">
        <title>ATP-dependent transport of leukotrienes B4 and C4 by the multidrug resistance protein ABCC4 (MRP4).</title>
        <authorList>
            <person name="Rius M."/>
            <person name="Hummel-Eisenbeiss J."/>
            <person name="Keppler D."/>
        </authorList>
    </citation>
    <scope>CATALYTIC ACTIVITY</scope>
    <scope>FUNCTION</scope>
    <scope>BIOPHYSICOCHEMICAL PROPERTIES</scope>
    <scope>ACTIVITY REGULATION</scope>
</reference>
<reference key="19">
    <citation type="journal article" date="2006" name="Cell">
        <title>Global, in vivo, and site-specific phosphorylation dynamics in signaling networks.</title>
        <authorList>
            <person name="Olsen J.V."/>
            <person name="Blagoev B."/>
            <person name="Gnad F."/>
            <person name="Macek B."/>
            <person name="Kumar C."/>
            <person name="Mortensen P."/>
            <person name="Mann M."/>
        </authorList>
    </citation>
    <scope>IDENTIFICATION BY MASS SPECTROMETRY [LARGE SCALE ANALYSIS]</scope>
    <source>
        <tissue>Cervix carcinoma</tissue>
    </source>
</reference>
<reference key="20">
    <citation type="journal article" date="2008" name="Proc. Natl. Acad. Sci. U.S.A.">
        <title>A quantitative atlas of mitotic phosphorylation.</title>
        <authorList>
            <person name="Dephoure N."/>
            <person name="Zhou C."/>
            <person name="Villen J."/>
            <person name="Beausoleil S.A."/>
            <person name="Bakalarski C.E."/>
            <person name="Elledge S.J."/>
            <person name="Gygi S.P."/>
        </authorList>
    </citation>
    <scope>PHOSPHORYLATION [LARGE SCALE ANALYSIS] AT THR-646</scope>
    <scope>IDENTIFICATION BY MASS SPECTROMETRY [LARGE SCALE ANALYSIS]</scope>
    <source>
        <tissue>Cervix carcinoma</tissue>
    </source>
</reference>
<reference key="21">
    <citation type="journal article" date="2009" name="Sci. Signal.">
        <title>Quantitative phosphoproteomic analysis of T cell receptor signaling reveals system-wide modulation of protein-protein interactions.</title>
        <authorList>
            <person name="Mayya V."/>
            <person name="Lundgren D.H."/>
            <person name="Hwang S.-I."/>
            <person name="Rezaul K."/>
            <person name="Wu L."/>
            <person name="Eng J.K."/>
            <person name="Rodionov V."/>
            <person name="Han D.K."/>
        </authorList>
    </citation>
    <scope>PHOSPHORYLATION [LARGE SCALE ANALYSIS] AT THR-646</scope>
    <scope>IDENTIFICATION BY MASS SPECTROMETRY [LARGE SCALE ANALYSIS]</scope>
    <source>
        <tissue>Leukemic T-cell</tissue>
    </source>
</reference>
<reference key="22">
    <citation type="journal article" date="2010" name="Sci. Signal.">
        <title>Quantitative phosphoproteomics reveals widespread full phosphorylation site occupancy during mitosis.</title>
        <authorList>
            <person name="Olsen J.V."/>
            <person name="Vermeulen M."/>
            <person name="Santamaria A."/>
            <person name="Kumar C."/>
            <person name="Miller M.L."/>
            <person name="Jensen L.J."/>
            <person name="Gnad F."/>
            <person name="Cox J."/>
            <person name="Jensen T.S."/>
            <person name="Nigg E.A."/>
            <person name="Brunak S."/>
            <person name="Mann M."/>
        </authorList>
    </citation>
    <scope>PHOSPHORYLATION [LARGE SCALE ANALYSIS] AT THR-646</scope>
    <scope>IDENTIFICATION BY MASS SPECTROMETRY [LARGE SCALE ANALYSIS]</scope>
    <source>
        <tissue>Cervix carcinoma</tissue>
    </source>
</reference>
<reference key="23">
    <citation type="journal article" date="2011" name="BMC Syst. Biol.">
        <title>Initial characterization of the human central proteome.</title>
        <authorList>
            <person name="Burkard T.R."/>
            <person name="Planyavsky M."/>
            <person name="Kaupe I."/>
            <person name="Breitwieser F.P."/>
            <person name="Buerckstuemmer T."/>
            <person name="Bennett K.L."/>
            <person name="Superti-Furga G."/>
            <person name="Colinge J."/>
        </authorList>
    </citation>
    <scope>IDENTIFICATION BY MASS SPECTROMETRY [LARGE SCALE ANALYSIS]</scope>
</reference>
<reference key="24">
    <citation type="journal article" date="2012" name="J. Biol. Chem.">
        <title>Sorting nexin 27 interacts with multidrug resistance-associated protein 4 (MRP4) and mediates internalization of MRP4.</title>
        <authorList>
            <person name="Hayashi H."/>
            <person name="Naoi S."/>
            <person name="Nakagawa T."/>
            <person name="Nishikawa T."/>
            <person name="Fukuda H."/>
            <person name="Imajoh-Ohmi S."/>
            <person name="Kondo A."/>
            <person name="Kubo K."/>
            <person name="Yabuki T."/>
            <person name="Hattori A."/>
            <person name="Hirouchi M."/>
            <person name="Sugiyama Y."/>
        </authorList>
    </citation>
    <scope>INTERACTION WITH SNX27</scope>
</reference>
<reference key="25">
    <citation type="journal article" date="2013" name="J. Proteome Res.">
        <title>Toward a comprehensive characterization of a human cancer cell phosphoproteome.</title>
        <authorList>
            <person name="Zhou H."/>
            <person name="Di Palma S."/>
            <person name="Preisinger C."/>
            <person name="Peng M."/>
            <person name="Polat A.N."/>
            <person name="Heck A.J."/>
            <person name="Mohammed S."/>
        </authorList>
    </citation>
    <scope>PHOSPHORYLATION [LARGE SCALE ANALYSIS] AT THR-646; THR-648; SER-664 AND SER-668</scope>
    <scope>IDENTIFICATION BY MASS SPECTROMETRY [LARGE SCALE ANALYSIS]</scope>
    <source>
        <tissue>Cervix carcinoma</tissue>
        <tissue>Erythroleukemia</tissue>
    </source>
</reference>
<reference key="26">
    <citation type="journal article" date="2008" name="Hum. Mutat.">
        <title>6-mercaptopurine and 9-(2-phosphonyl-methoxyethyl) adenine (PMEA) transport altered by two missense mutations in the drug transporter gene ABCC4.</title>
        <authorList>
            <person name="Janke D."/>
            <person name="Mehralivand S."/>
            <person name="Strand D."/>
            <person name="Goedtel-Armbrust U."/>
            <person name="Habermeier A."/>
            <person name="Gradhand U."/>
            <person name="Fischer C."/>
            <person name="Toliat M.R."/>
            <person name="Fritz P."/>
            <person name="Zanger U.M."/>
            <person name="Schwab M."/>
            <person name="Fromm M.F."/>
            <person name="Nuernberg P."/>
            <person name="Wojnowski L."/>
            <person name="Closs E.I."/>
            <person name="Lang T."/>
        </authorList>
    </citation>
    <scope>VARIANTS CYS-556; ILE-776; ILE-820; PHE-854 AND VAL-866</scope>
    <scope>CHARACTERIZATION OF VARIANTS TRP-187; ASN-304; GLU-487; CYS-556; LYS-757; ILE-776; ILE-820; PHE-854; VAL-866 AND MET-1142</scope>
    <scope>CATALYTIC ACTIVITY</scope>
    <scope>FUNCTION</scope>
</reference>
<reference key="27">
    <citation type="journal article" date="2016" name="Biochem. Biophys. Res. Commun.">
        <title>N-linked glycans do not affect plasma membrane localization of multidrug resistance protein 4 (MRP4) but selectively alter its prostaglandin E2 transport activity.</title>
        <authorList>
            <person name="Miah M.F."/>
            <person name="Conseil G."/>
            <person name="Cole S.P."/>
        </authorList>
    </citation>
    <scope>FUNCTION</scope>
    <scope>CATALYTIC ACTIVITY</scope>
    <scope>GLYCOSYLATION AT ASN-746 AND ASN-754</scope>
    <scope>MUTAGENESIS OF ASN-746 AND ASN-754</scope>
    <scope>SUBCELLULAR LOCATION</scope>
</reference>
<reference key="28">
    <citation type="journal article" date="2010" name="Leg. Med.">
        <title>A Japanese-specific allele in the GALNT11 gene.</title>
        <authorList>
            <person name="Yuasa I."/>
            <person name="Umetsu K."/>
            <person name="Matsusue A."/>
            <person name="Nishimukai H."/>
            <person name="Harihara S."/>
            <person name="Fukumori Y."/>
            <person name="Saitou N."/>
            <person name="Jin F."/>
            <person name="Chattopadhyay P.K."/>
            <person name="Henke L."/>
            <person name="Henke J."/>
        </authorList>
    </citation>
    <scope>VARIANT LYS-757</scope>
</reference>
<accession>O15439</accession>
<accession>A9Z1Z7</accession>
<accession>B7Z3Q7</accession>
<accession>Q8IVZ4</accession>
<accession>Q8IZN6</accession>
<accession>Q8NEW8</accession>
<accession>Q9Y6J2</accession>
<keyword id="KW-0002">3D-structure</keyword>
<keyword id="KW-0025">Alternative splicing</keyword>
<keyword id="KW-0067">ATP-binding</keyword>
<keyword id="KW-1003">Cell membrane</keyword>
<keyword id="KW-0325">Glycoprotein</keyword>
<keyword id="KW-0445">Lipid transport</keyword>
<keyword id="KW-0472">Membrane</keyword>
<keyword id="KW-0547">Nucleotide-binding</keyword>
<keyword id="KW-0597">Phosphoprotein</keyword>
<keyword id="KW-1267">Proteomics identification</keyword>
<keyword id="KW-1185">Reference proteome</keyword>
<keyword id="KW-0677">Repeat</keyword>
<keyword id="KW-1278">Translocase</keyword>
<keyword id="KW-0812">Transmembrane</keyword>
<keyword id="KW-1133">Transmembrane helix</keyword>
<keyword id="KW-0813">Transport</keyword>
<dbReference type="EC" id="7.6.2.-" evidence="6 8 9 10 11 12 13"/>
<dbReference type="EC" id="7.6.2.2" evidence="6 7 12 14 16"/>
<dbReference type="EC" id="7.6.2.3" evidence="6 15 19"/>
<dbReference type="EMBL" id="AF071202">
    <property type="protein sequence ID" value="AAC27076.1"/>
    <property type="molecule type" value="mRNA"/>
</dbReference>
<dbReference type="EMBL" id="AY081219">
    <property type="protein sequence ID" value="AAL88745.1"/>
    <property type="molecule type" value="mRNA"/>
</dbReference>
<dbReference type="EMBL" id="AY207008">
    <property type="protein sequence ID" value="AAO37649.1"/>
    <property type="molecule type" value="mRNA"/>
</dbReference>
<dbReference type="EMBL" id="AF541977">
    <property type="protein sequence ID" value="AAN17334.1"/>
    <property type="molecule type" value="mRNA"/>
</dbReference>
<dbReference type="EMBL" id="AK296247">
    <property type="protein sequence ID" value="BAH12293.1"/>
    <property type="molecule type" value="mRNA"/>
</dbReference>
<dbReference type="EMBL" id="AL139381">
    <property type="status" value="NOT_ANNOTATED_CDS"/>
    <property type="molecule type" value="Genomic_DNA"/>
</dbReference>
<dbReference type="EMBL" id="AL157818">
    <property type="status" value="NOT_ANNOTATED_CDS"/>
    <property type="molecule type" value="Genomic_DNA"/>
</dbReference>
<dbReference type="EMBL" id="AL356257">
    <property type="status" value="NOT_ANNOTATED_CDS"/>
    <property type="molecule type" value="Genomic_DNA"/>
</dbReference>
<dbReference type="EMBL" id="AL359750">
    <property type="status" value="NOT_ANNOTATED_CDS"/>
    <property type="molecule type" value="Genomic_DNA"/>
</dbReference>
<dbReference type="EMBL" id="CH471085">
    <property type="protein sequence ID" value="EAX08951.1"/>
    <property type="molecule type" value="Genomic_DNA"/>
</dbReference>
<dbReference type="EMBL" id="CH471085">
    <property type="protein sequence ID" value="EAX08950.1"/>
    <property type="molecule type" value="Genomic_DNA"/>
</dbReference>
<dbReference type="EMBL" id="BC041560">
    <property type="protein sequence ID" value="AAH41560.1"/>
    <property type="molecule type" value="mRNA"/>
</dbReference>
<dbReference type="EMBL" id="U83660">
    <property type="protein sequence ID" value="AAB71757.1"/>
    <property type="molecule type" value="mRNA"/>
</dbReference>
<dbReference type="CCDS" id="CCDS45061.1">
    <molecule id="O15439-3"/>
</dbReference>
<dbReference type="CCDS" id="CCDS76643.1">
    <molecule id="O15439-4"/>
</dbReference>
<dbReference type="CCDS" id="CCDS86356.1">
    <molecule id="O15439-2"/>
</dbReference>
<dbReference type="CCDS" id="CCDS9474.1">
    <molecule id="O15439-1"/>
</dbReference>
<dbReference type="RefSeq" id="NP_001098985.1">
    <molecule id="O15439-3"/>
    <property type="nucleotide sequence ID" value="NM_001105515.3"/>
</dbReference>
<dbReference type="RefSeq" id="NP_001288758.1">
    <molecule id="O15439-2"/>
    <property type="nucleotide sequence ID" value="NM_001301829.2"/>
</dbReference>
<dbReference type="RefSeq" id="NP_001288759.1">
    <molecule id="O15439-4"/>
    <property type="nucleotide sequence ID" value="NM_001301830.2"/>
</dbReference>
<dbReference type="RefSeq" id="NP_005836.2">
    <molecule id="O15439-1"/>
    <property type="nucleotide sequence ID" value="NM_005845.5"/>
</dbReference>
<dbReference type="PDB" id="8BJF">
    <property type="method" value="EM"/>
    <property type="resolution" value="3.00 A"/>
    <property type="chains" value="A=1-1325"/>
</dbReference>
<dbReference type="PDB" id="8BWO">
    <property type="method" value="EM"/>
    <property type="resolution" value="3.20 A"/>
    <property type="chains" value="A=1-1325"/>
</dbReference>
<dbReference type="PDB" id="8BWP">
    <property type="method" value="EM"/>
    <property type="resolution" value="3.60 A"/>
    <property type="chains" value="A=1-1325"/>
</dbReference>
<dbReference type="PDB" id="8BWQ">
    <property type="method" value="EM"/>
    <property type="resolution" value="3.90 A"/>
    <property type="chains" value="A=1-1325"/>
</dbReference>
<dbReference type="PDB" id="8BWR">
    <property type="method" value="EM"/>
    <property type="resolution" value="4.00 A"/>
    <property type="chains" value="A=1-1325"/>
</dbReference>
<dbReference type="PDB" id="8I4A">
    <property type="method" value="EM"/>
    <property type="resolution" value="3.40 A"/>
    <property type="chains" value="A=1-1325"/>
</dbReference>
<dbReference type="PDB" id="8I4B">
    <property type="method" value="EM"/>
    <property type="resolution" value="3.13 A"/>
    <property type="chains" value="A=1-1325"/>
</dbReference>
<dbReference type="PDB" id="8I4C">
    <property type="method" value="EM"/>
    <property type="resolution" value="3.08 A"/>
    <property type="chains" value="A=1-1325"/>
</dbReference>
<dbReference type="PDB" id="8IZ7">
    <property type="method" value="EM"/>
    <property type="resolution" value="3.80 A"/>
    <property type="chains" value="A=1-1325"/>
</dbReference>
<dbReference type="PDB" id="8IZ8">
    <property type="method" value="EM"/>
    <property type="resolution" value="3.13 A"/>
    <property type="chains" value="A=1-1325"/>
</dbReference>
<dbReference type="PDB" id="8IZ9">
    <property type="method" value="EM"/>
    <property type="resolution" value="2.95 A"/>
    <property type="chains" value="A=1-1325"/>
</dbReference>
<dbReference type="PDB" id="8IZA">
    <property type="method" value="EM"/>
    <property type="resolution" value="3.48 A"/>
    <property type="chains" value="A=1-1325"/>
</dbReference>
<dbReference type="PDB" id="8J3W">
    <property type="method" value="EM"/>
    <property type="resolution" value="3.07 A"/>
    <property type="chains" value="A=1-1325"/>
</dbReference>
<dbReference type="PDB" id="8J3Z">
    <property type="method" value="EM"/>
    <property type="resolution" value="3.17 A"/>
    <property type="chains" value="A=1-1325"/>
</dbReference>
<dbReference type="PDB" id="8XOK">
    <property type="method" value="EM"/>
    <property type="resolution" value="2.84 A"/>
    <property type="chains" value="A=1-1325"/>
</dbReference>
<dbReference type="PDB" id="8XOL">
    <property type="method" value="EM"/>
    <property type="resolution" value="3.02 A"/>
    <property type="chains" value="A=1-1325"/>
</dbReference>
<dbReference type="PDB" id="8XOM">
    <property type="method" value="EM"/>
    <property type="resolution" value="3.05 A"/>
    <property type="chains" value="A=1-1325"/>
</dbReference>
<dbReference type="PDBsum" id="8BJF"/>
<dbReference type="PDBsum" id="8BWO"/>
<dbReference type="PDBsum" id="8BWP"/>
<dbReference type="PDBsum" id="8BWQ"/>
<dbReference type="PDBsum" id="8BWR"/>
<dbReference type="PDBsum" id="8I4A"/>
<dbReference type="PDBsum" id="8I4B"/>
<dbReference type="PDBsum" id="8I4C"/>
<dbReference type="PDBsum" id="8IZ7"/>
<dbReference type="PDBsum" id="8IZ8"/>
<dbReference type="PDBsum" id="8IZ9"/>
<dbReference type="PDBsum" id="8IZA"/>
<dbReference type="PDBsum" id="8J3W"/>
<dbReference type="PDBsum" id="8J3Z"/>
<dbReference type="PDBsum" id="8XOK"/>
<dbReference type="PDBsum" id="8XOL"/>
<dbReference type="PDBsum" id="8XOM"/>
<dbReference type="EMDB" id="EMD-16088"/>
<dbReference type="EMDB" id="EMD-16292"/>
<dbReference type="EMDB" id="EMD-16293"/>
<dbReference type="EMDB" id="EMD-16294"/>
<dbReference type="EMDB" id="EMD-16295"/>
<dbReference type="EMDB" id="EMD-16296"/>
<dbReference type="EMDB" id="EMD-16297"/>
<dbReference type="EMDB" id="EMD-35167"/>
<dbReference type="EMDB" id="EMD-35168"/>
<dbReference type="EMDB" id="EMD-35169"/>
<dbReference type="EMDB" id="EMD-35834"/>
<dbReference type="EMDB" id="EMD-35835"/>
<dbReference type="EMDB" id="EMD-35836"/>
<dbReference type="EMDB" id="EMD-35837"/>
<dbReference type="EMDB" id="EMD-35967"/>
<dbReference type="EMDB" id="EMD-35968"/>
<dbReference type="EMDB" id="EMD-38532"/>
<dbReference type="EMDB" id="EMD-38533"/>
<dbReference type="EMDB" id="EMD-38534"/>
<dbReference type="SMR" id="O15439"/>
<dbReference type="BioGRID" id="115551">
    <property type="interactions" value="75"/>
</dbReference>
<dbReference type="FunCoup" id="O15439">
    <property type="interactions" value="784"/>
</dbReference>
<dbReference type="IntAct" id="O15439">
    <property type="interactions" value="48"/>
</dbReference>
<dbReference type="MINT" id="O15439"/>
<dbReference type="STRING" id="9606.ENSP00000494609"/>
<dbReference type="BindingDB" id="O15439"/>
<dbReference type="ChEMBL" id="CHEMBL1743128"/>
<dbReference type="DrugBank" id="DB00718">
    <property type="generic name" value="Adefovir dipivoxil"/>
</dbReference>
<dbReference type="DrugBank" id="DB00770">
    <property type="generic name" value="Alprostadil"/>
</dbReference>
<dbReference type="DrugBank" id="DB01076">
    <property type="generic name" value="Atorvastatin"/>
</dbReference>
<dbReference type="DrugBank" id="DB00171">
    <property type="generic name" value="ATP"/>
</dbReference>
<dbReference type="DrugBank" id="DB01327">
    <property type="generic name" value="Cefazolin"/>
</dbReference>
<dbReference type="DrugBank" id="DB00482">
    <property type="generic name" value="Celecoxib"/>
</dbReference>
<dbReference type="DrugBank" id="DB02659">
    <property type="generic name" value="Cholic Acid"/>
</dbReference>
<dbReference type="DrugBank" id="DB00286">
    <property type="generic name" value="Conjugated estrogens"/>
</dbReference>
<dbReference type="DrugBank" id="DB02527">
    <property type="generic name" value="Cyclic adenosine monophosphate"/>
</dbReference>
<dbReference type="DrugBank" id="DB09213">
    <property type="generic name" value="Dexibuprofen"/>
</dbReference>
<dbReference type="DrugBank" id="DB00586">
    <property type="generic name" value="Diclofenac"/>
</dbReference>
<dbReference type="DrugBank" id="DB00917">
    <property type="generic name" value="Dinoprostone"/>
</dbReference>
<dbReference type="DrugBank" id="DB00975">
    <property type="generic name" value="Dipyridamole"/>
</dbReference>
<dbReference type="DrugBank" id="DB13146">
    <property type="generic name" value="Fluciclovine (18F)"/>
</dbReference>
<dbReference type="DrugBank" id="DB00544">
    <property type="generic name" value="Fluorouracil"/>
</dbReference>
<dbReference type="DrugBank" id="DB00712">
    <property type="generic name" value="Flurbiprofen"/>
</dbReference>
<dbReference type="DrugBank" id="DB00158">
    <property type="generic name" value="Folic acid"/>
</dbReference>
<dbReference type="DrugBank" id="DB08884">
    <property type="generic name" value="Gadoxetic acid"/>
</dbReference>
<dbReference type="DrugBank" id="DB00143">
    <property type="generic name" value="Glutathione"/>
</dbReference>
<dbReference type="DrugBank" id="DB00999">
    <property type="generic name" value="Hydrochlorothiazide"/>
</dbReference>
<dbReference type="DrugBank" id="DB01050">
    <property type="generic name" value="Ibuprofen"/>
</dbReference>
<dbReference type="DrugBank" id="DB00619">
    <property type="generic name" value="Imatinib"/>
</dbReference>
<dbReference type="DrugBank" id="DB00328">
    <property type="generic name" value="Indomethacin"/>
</dbReference>
<dbReference type="DrugBank" id="DB01009">
    <property type="generic name" value="Ketoprofen"/>
</dbReference>
<dbReference type="DrugBank" id="DB00709">
    <property type="generic name" value="Lamivudine"/>
</dbReference>
<dbReference type="DrugBank" id="DB00814">
    <property type="generic name" value="Meloxicam"/>
</dbReference>
<dbReference type="DrugBank" id="DB01033">
    <property type="generic name" value="Mercaptopurine"/>
</dbReference>
<dbReference type="DrugBank" id="DB00563">
    <property type="generic name" value="Methotrexate"/>
</dbReference>
<dbReference type="DrugBank" id="DB00731">
    <property type="generic name" value="Nateglinide"/>
</dbReference>
<dbReference type="DrugBank" id="DB00198">
    <property type="generic name" value="Oseltamivir"/>
</dbReference>
<dbReference type="DrugBank" id="DB01708">
    <property type="generic name" value="Prasterone"/>
</dbReference>
<dbReference type="DrugBank" id="DB01032">
    <property type="generic name" value="Probenecid"/>
</dbReference>
<dbReference type="DrugBank" id="DB01069">
    <property type="generic name" value="Promethazine"/>
</dbReference>
<dbReference type="DrugBank" id="DB00481">
    <property type="generic name" value="Raloxifene"/>
</dbReference>
<dbReference type="DrugBank" id="DB14761">
    <property type="generic name" value="Remdesivir"/>
</dbReference>
<dbReference type="DrugBank" id="DB00533">
    <property type="generic name" value="Rofecoxib"/>
</dbReference>
<dbReference type="DrugBank" id="DB01098">
    <property type="generic name" value="Rosuvastatin"/>
</dbReference>
<dbReference type="DrugBank" id="DB12332">
    <property type="generic name" value="Rucaparib"/>
</dbReference>
<dbReference type="DrugBank" id="DB00203">
    <property type="generic name" value="Sildenafil"/>
</dbReference>
<dbReference type="DrugBank" id="DB00398">
    <property type="generic name" value="Sorafenib"/>
</dbReference>
<dbReference type="DrugBank" id="DB01138">
    <property type="generic name" value="Sulfinpyrazone"/>
</dbReference>
<dbReference type="DrugBank" id="DB01268">
    <property type="generic name" value="Sunitinib"/>
</dbReference>
<dbReference type="DrugBank" id="DB04348">
    <property type="generic name" value="Taurocholic acid"/>
</dbReference>
<dbReference type="DrugBank" id="DB14126">
    <property type="generic name" value="Tenofovir"/>
</dbReference>
<dbReference type="DrugBank" id="DB09299">
    <property type="generic name" value="Tenofovir alafenamide"/>
</dbReference>
<dbReference type="DrugBank" id="DB00300">
    <property type="generic name" value="Tenofovir disoproxil"/>
</dbReference>
<dbReference type="DrugBank" id="DB00352">
    <property type="generic name" value="Tioguanine"/>
</dbReference>
<dbReference type="DrugBank" id="DB01586">
    <property type="generic name" value="Ursodeoxycholic acid"/>
</dbReference>
<dbReference type="DrugBank" id="DB00661">
    <property type="generic name" value="Verapamil"/>
</dbReference>
<dbReference type="DrugBank" id="DB00495">
    <property type="generic name" value="Zidovudine"/>
</dbReference>
<dbReference type="DrugCentral" id="O15439"/>
<dbReference type="GuidetoPHARMACOLOGY" id="782"/>
<dbReference type="TCDB" id="3.A.1.208.7">
    <property type="family name" value="the atp-binding cassette (abc) superfamily"/>
</dbReference>
<dbReference type="GlyCosmos" id="O15439">
    <property type="glycosylation" value="2 sites, No reported glycans"/>
</dbReference>
<dbReference type="GlyGen" id="O15439">
    <property type="glycosylation" value="3 sites, 5 N-linked glycans (1 site), 1 O-linked glycan (1 site)"/>
</dbReference>
<dbReference type="iPTMnet" id="O15439"/>
<dbReference type="PhosphoSitePlus" id="O15439"/>
<dbReference type="SwissPalm" id="O15439"/>
<dbReference type="BioMuta" id="ABCC4"/>
<dbReference type="jPOST" id="O15439"/>
<dbReference type="MassIVE" id="O15439"/>
<dbReference type="PaxDb" id="9606-ENSP00000366084"/>
<dbReference type="PeptideAtlas" id="O15439"/>
<dbReference type="ProteomicsDB" id="48664">
    <molecule id="O15439-1"/>
</dbReference>
<dbReference type="ProteomicsDB" id="48665">
    <molecule id="O15439-2"/>
</dbReference>
<dbReference type="ProteomicsDB" id="48666">
    <molecule id="O15439-3"/>
</dbReference>
<dbReference type="ProteomicsDB" id="6540"/>
<dbReference type="Pumba" id="O15439"/>
<dbReference type="Antibodypedia" id="3448">
    <property type="antibodies" value="459 antibodies from 36 providers"/>
</dbReference>
<dbReference type="DNASU" id="10257"/>
<dbReference type="Ensembl" id="ENST00000536256.3">
    <molecule id="O15439-4"/>
    <property type="protein sequence ID" value="ENSP00000442024.1"/>
    <property type="gene ID" value="ENSG00000125257.16"/>
</dbReference>
<dbReference type="Ensembl" id="ENST00000629385.1">
    <molecule id="O15439-3"/>
    <property type="protein sequence ID" value="ENSP00000487081.1"/>
    <property type="gene ID" value="ENSG00000125257.16"/>
</dbReference>
<dbReference type="Ensembl" id="ENST00000645237.2">
    <molecule id="O15439-1"/>
    <property type="protein sequence ID" value="ENSP00000494609.1"/>
    <property type="gene ID" value="ENSG00000125257.16"/>
</dbReference>
<dbReference type="Ensembl" id="ENST00000646439.1">
    <molecule id="O15439-2"/>
    <property type="protein sequence ID" value="ENSP00000494751.1"/>
    <property type="gene ID" value="ENSG00000125257.16"/>
</dbReference>
<dbReference type="GeneID" id="10257"/>
<dbReference type="KEGG" id="hsa:10257"/>
<dbReference type="MANE-Select" id="ENST00000645237.2">
    <property type="protein sequence ID" value="ENSP00000494609.1"/>
    <property type="RefSeq nucleotide sequence ID" value="NM_005845.5"/>
    <property type="RefSeq protein sequence ID" value="NP_005836.2"/>
</dbReference>
<dbReference type="UCSC" id="uc001vmd.5">
    <molecule id="O15439-1"/>
    <property type="organism name" value="human"/>
</dbReference>
<dbReference type="UCSC" id="uc010tih.2">
    <property type="organism name" value="human"/>
</dbReference>
<dbReference type="AGR" id="HGNC:55"/>
<dbReference type="CTD" id="10257"/>
<dbReference type="DisGeNET" id="10257"/>
<dbReference type="GeneCards" id="ABCC4"/>
<dbReference type="HGNC" id="HGNC:55">
    <property type="gene designation" value="ABCC4"/>
</dbReference>
<dbReference type="HPA" id="ENSG00000125257">
    <property type="expression patterns" value="Tissue enhanced (prostate)"/>
</dbReference>
<dbReference type="MalaCards" id="ABCC4"/>
<dbReference type="MIM" id="605250">
    <property type="type" value="gene"/>
</dbReference>
<dbReference type="neXtProt" id="NX_O15439"/>
<dbReference type="OpenTargets" id="ENSG00000125257"/>
<dbReference type="PharmGKB" id="PA397"/>
<dbReference type="VEuPathDB" id="HostDB:ENSG00000125257"/>
<dbReference type="eggNOG" id="KOG0054">
    <property type="taxonomic scope" value="Eukaryota"/>
</dbReference>
<dbReference type="GeneTree" id="ENSGT00940000153931"/>
<dbReference type="HOGENOM" id="CLU_000604_27_1_1"/>
<dbReference type="InParanoid" id="O15439"/>
<dbReference type="OMA" id="ACAQWFH"/>
<dbReference type="OrthoDB" id="6500128at2759"/>
<dbReference type="PAN-GO" id="O15439">
    <property type="GO annotations" value="3 GO annotations based on evolutionary models"/>
</dbReference>
<dbReference type="PhylomeDB" id="O15439"/>
<dbReference type="TreeFam" id="TF105202"/>
<dbReference type="BRENDA" id="7.6.2.2">
    <property type="organism ID" value="2681"/>
</dbReference>
<dbReference type="BRENDA" id="7.6.2.3">
    <property type="organism ID" value="2681"/>
</dbReference>
<dbReference type="PathwayCommons" id="O15439"/>
<dbReference type="Reactome" id="R-HSA-114608">
    <property type="pathway name" value="Platelet degranulation"/>
</dbReference>
<dbReference type="Reactome" id="R-HSA-382556">
    <property type="pathway name" value="ABC-family proteins mediated transport"/>
</dbReference>
<dbReference type="Reactome" id="R-HSA-9748787">
    <property type="pathway name" value="Azathioprine ADME"/>
</dbReference>
<dbReference type="Reactome" id="R-HSA-9753281">
    <property type="pathway name" value="Paracetamol ADME"/>
</dbReference>
<dbReference type="SignaLink" id="O15439"/>
<dbReference type="SIGNOR" id="O15439"/>
<dbReference type="BioGRID-ORCS" id="10257">
    <property type="hits" value="13 hits in 1158 CRISPR screens"/>
</dbReference>
<dbReference type="ChiTaRS" id="ABCC4">
    <property type="organism name" value="human"/>
</dbReference>
<dbReference type="GeneWiki" id="ABCC4"/>
<dbReference type="GenomeRNAi" id="10257"/>
<dbReference type="Pharos" id="O15439">
    <property type="development level" value="Tchem"/>
</dbReference>
<dbReference type="PRO" id="PR:O15439"/>
<dbReference type="Proteomes" id="UP000005640">
    <property type="component" value="Chromosome 13"/>
</dbReference>
<dbReference type="RNAct" id="O15439">
    <property type="molecule type" value="protein"/>
</dbReference>
<dbReference type="Bgee" id="ENSG00000125257">
    <property type="expression patterns" value="Expressed in palpebral conjunctiva and 157 other cell types or tissues"/>
</dbReference>
<dbReference type="ExpressionAtlas" id="O15439">
    <property type="expression patterns" value="baseline and differential"/>
</dbReference>
<dbReference type="GO" id="GO:0016324">
    <property type="term" value="C:apical plasma membrane"/>
    <property type="evidence" value="ECO:0000314"/>
    <property type="project" value="UniProtKB"/>
</dbReference>
<dbReference type="GO" id="GO:0016323">
    <property type="term" value="C:basolateral plasma membrane"/>
    <property type="evidence" value="ECO:0000314"/>
    <property type="project" value="CACAO"/>
</dbReference>
<dbReference type="GO" id="GO:0098591">
    <property type="term" value="C:external side of apical plasma membrane"/>
    <property type="evidence" value="ECO:0000250"/>
    <property type="project" value="ARUK-UCL"/>
</dbReference>
<dbReference type="GO" id="GO:0005794">
    <property type="term" value="C:Golgi apparatus"/>
    <property type="evidence" value="ECO:0000314"/>
    <property type="project" value="HPA"/>
</dbReference>
<dbReference type="GO" id="GO:0043231">
    <property type="term" value="C:intracellular membrane-bounded organelle"/>
    <property type="evidence" value="ECO:0000314"/>
    <property type="project" value="HPA"/>
</dbReference>
<dbReference type="GO" id="GO:0016020">
    <property type="term" value="C:membrane"/>
    <property type="evidence" value="ECO:0000314"/>
    <property type="project" value="MGI"/>
</dbReference>
<dbReference type="GO" id="GO:0005730">
    <property type="term" value="C:nucleolus"/>
    <property type="evidence" value="ECO:0000314"/>
    <property type="project" value="HPA"/>
</dbReference>
<dbReference type="GO" id="GO:0005886">
    <property type="term" value="C:plasma membrane"/>
    <property type="evidence" value="ECO:0000314"/>
    <property type="project" value="HPA"/>
</dbReference>
<dbReference type="GO" id="GO:0031088">
    <property type="term" value="C:platelet dense granule membrane"/>
    <property type="evidence" value="ECO:0000314"/>
    <property type="project" value="MGI"/>
</dbReference>
<dbReference type="GO" id="GO:0016404">
    <property type="term" value="F:15-hydroxyprostaglandin dehydrogenase (NAD+) activity"/>
    <property type="evidence" value="ECO:0000303"/>
    <property type="project" value="UniProtKB"/>
</dbReference>
<dbReference type="GO" id="GO:0015432">
    <property type="term" value="F:ABC-type bile acid transporter activity"/>
    <property type="evidence" value="ECO:0000315"/>
    <property type="project" value="UniProtKB"/>
</dbReference>
<dbReference type="GO" id="GO:0015431">
    <property type="term" value="F:ABC-type glutathione S-conjugate transporter activity"/>
    <property type="evidence" value="ECO:0000314"/>
    <property type="project" value="UniProtKB"/>
</dbReference>
<dbReference type="GO" id="GO:0140359">
    <property type="term" value="F:ABC-type transporter activity"/>
    <property type="evidence" value="ECO:0000304"/>
    <property type="project" value="Reactome"/>
</dbReference>
<dbReference type="GO" id="GO:0008559">
    <property type="term" value="F:ABC-type xenobiotic transporter activity"/>
    <property type="evidence" value="ECO:0007669"/>
    <property type="project" value="UniProtKB-EC"/>
</dbReference>
<dbReference type="GO" id="GO:0005524">
    <property type="term" value="F:ATP binding"/>
    <property type="evidence" value="ECO:0007669"/>
    <property type="project" value="UniProtKB-KW"/>
</dbReference>
<dbReference type="GO" id="GO:0016887">
    <property type="term" value="F:ATP hydrolysis activity"/>
    <property type="evidence" value="ECO:0007669"/>
    <property type="project" value="InterPro"/>
</dbReference>
<dbReference type="GO" id="GO:0043225">
    <property type="term" value="F:ATPase-coupled inorganic anion transmembrane transporter activity"/>
    <property type="evidence" value="ECO:0000304"/>
    <property type="project" value="Reactome"/>
</dbReference>
<dbReference type="GO" id="GO:0042626">
    <property type="term" value="F:ATPase-coupled transmembrane transporter activity"/>
    <property type="evidence" value="ECO:0000314"/>
    <property type="project" value="UniProtKB"/>
</dbReference>
<dbReference type="GO" id="GO:0015562">
    <property type="term" value="F:efflux transmembrane transporter activity"/>
    <property type="evidence" value="ECO:0000315"/>
    <property type="project" value="ARUK-UCL"/>
</dbReference>
<dbReference type="GO" id="GO:0034634">
    <property type="term" value="F:glutathione transmembrane transporter activity"/>
    <property type="evidence" value="ECO:0000315"/>
    <property type="project" value="UniProtKB"/>
</dbReference>
<dbReference type="GO" id="GO:0001409">
    <property type="term" value="F:guanine nucleotide transmembrane transporter activity"/>
    <property type="evidence" value="ECO:0000314"/>
    <property type="project" value="UniProtKB"/>
</dbReference>
<dbReference type="GO" id="GO:0015132">
    <property type="term" value="F:prostaglandin transmembrane transporter activity"/>
    <property type="evidence" value="ECO:0000315"/>
    <property type="project" value="UniProtKB"/>
</dbReference>
<dbReference type="GO" id="GO:0015216">
    <property type="term" value="F:purine nucleotide transmembrane transporter activity"/>
    <property type="evidence" value="ECO:0000315"/>
    <property type="project" value="ARUK-UCL"/>
</dbReference>
<dbReference type="GO" id="GO:0015143">
    <property type="term" value="F:urate transmembrane transporter activity"/>
    <property type="evidence" value="ECO:0000315"/>
    <property type="project" value="UniProtKB"/>
</dbReference>
<dbReference type="GO" id="GO:0042910">
    <property type="term" value="F:xenobiotic transmembrane transporter activity"/>
    <property type="evidence" value="ECO:0000314"/>
    <property type="project" value="UniProtKB"/>
</dbReference>
<dbReference type="GO" id="GO:0015721">
    <property type="term" value="P:bile acid and bile salt transport"/>
    <property type="evidence" value="ECO:0000315"/>
    <property type="project" value="UniProtKB"/>
</dbReference>
<dbReference type="GO" id="GO:0070730">
    <property type="term" value="P:cAMP transport"/>
    <property type="evidence" value="ECO:0000314"/>
    <property type="project" value="UniProtKB"/>
</dbReference>
<dbReference type="GO" id="GO:0060271">
    <property type="term" value="P:cilium assembly"/>
    <property type="evidence" value="ECO:0000315"/>
    <property type="project" value="MGI"/>
</dbReference>
<dbReference type="GO" id="GO:0140115">
    <property type="term" value="P:export across plasma membrane"/>
    <property type="evidence" value="ECO:0000315"/>
    <property type="project" value="ARUK-UCL"/>
</dbReference>
<dbReference type="GO" id="GO:0071716">
    <property type="term" value="P:leukotriene transport"/>
    <property type="evidence" value="ECO:0000314"/>
    <property type="project" value="UniProtKB"/>
</dbReference>
<dbReference type="GO" id="GO:0002576">
    <property type="term" value="P:platelet degranulation"/>
    <property type="evidence" value="ECO:0000304"/>
    <property type="project" value="Reactome"/>
</dbReference>
<dbReference type="GO" id="GO:0032310">
    <property type="term" value="P:prostaglandin secretion"/>
    <property type="evidence" value="ECO:0000314"/>
    <property type="project" value="MGI"/>
</dbReference>
<dbReference type="GO" id="GO:0015732">
    <property type="term" value="P:prostaglandin transport"/>
    <property type="evidence" value="ECO:0000315"/>
    <property type="project" value="UniProtKB"/>
</dbReference>
<dbReference type="GO" id="GO:0055085">
    <property type="term" value="P:transmembrane transport"/>
    <property type="evidence" value="ECO:0000318"/>
    <property type="project" value="GO_Central"/>
</dbReference>
<dbReference type="GO" id="GO:0150104">
    <property type="term" value="P:transport across blood-brain barrier"/>
    <property type="evidence" value="ECO:0000303"/>
    <property type="project" value="ARUK-UCL"/>
</dbReference>
<dbReference type="GO" id="GO:0015747">
    <property type="term" value="P:urate transport"/>
    <property type="evidence" value="ECO:0000315"/>
    <property type="project" value="UniProtKB"/>
</dbReference>
<dbReference type="GO" id="GO:0006805">
    <property type="term" value="P:xenobiotic metabolic process"/>
    <property type="evidence" value="ECO:0000304"/>
    <property type="project" value="Reactome"/>
</dbReference>
<dbReference type="GO" id="GO:0006855">
    <property type="term" value="P:xenobiotic transmembrane transport"/>
    <property type="evidence" value="ECO:0000304"/>
    <property type="project" value="Reactome"/>
</dbReference>
<dbReference type="CDD" id="cd18593">
    <property type="entry name" value="ABC_6TM_MRP4_D1_like"/>
    <property type="match status" value="1"/>
</dbReference>
<dbReference type="CDD" id="cd18601">
    <property type="entry name" value="ABC_6TM_MRP4_D2_like"/>
    <property type="match status" value="1"/>
</dbReference>
<dbReference type="CDD" id="cd03250">
    <property type="entry name" value="ABCC_MRP_domain1"/>
    <property type="match status" value="1"/>
</dbReference>
<dbReference type="CDD" id="cd03244">
    <property type="entry name" value="ABCC_MRP_domain2"/>
    <property type="match status" value="1"/>
</dbReference>
<dbReference type="FunFam" id="1.20.1560.10:FF:000027">
    <property type="entry name" value="ATP-binding cassette subfamily C member 4"/>
    <property type="match status" value="1"/>
</dbReference>
<dbReference type="FunFam" id="3.40.50.300:FF:002135">
    <property type="entry name" value="Multidrug resistance-associated protein 4 isoform A"/>
    <property type="match status" value="1"/>
</dbReference>
<dbReference type="FunFam" id="1.20.1560.10:FF:000014">
    <property type="entry name" value="Multidrug resistance-associated protein member 4"/>
    <property type="match status" value="1"/>
</dbReference>
<dbReference type="FunFam" id="3.40.50.300:FF:000163">
    <property type="entry name" value="Multidrug resistance-associated protein member 4"/>
    <property type="match status" value="1"/>
</dbReference>
<dbReference type="Gene3D" id="1.20.1560.10">
    <property type="entry name" value="ABC transporter type 1, transmembrane domain"/>
    <property type="match status" value="2"/>
</dbReference>
<dbReference type="Gene3D" id="3.40.50.300">
    <property type="entry name" value="P-loop containing nucleotide triphosphate hydrolases"/>
    <property type="match status" value="2"/>
</dbReference>
<dbReference type="InterPro" id="IPR003593">
    <property type="entry name" value="AAA+_ATPase"/>
</dbReference>
<dbReference type="InterPro" id="IPR011527">
    <property type="entry name" value="ABC1_TM_dom"/>
</dbReference>
<dbReference type="InterPro" id="IPR036640">
    <property type="entry name" value="ABC1_TM_sf"/>
</dbReference>
<dbReference type="InterPro" id="IPR003439">
    <property type="entry name" value="ABC_transporter-like_ATP-bd"/>
</dbReference>
<dbReference type="InterPro" id="IPR017871">
    <property type="entry name" value="ABC_transporter-like_CS"/>
</dbReference>
<dbReference type="InterPro" id="IPR050173">
    <property type="entry name" value="ABC_transporter_C-like"/>
</dbReference>
<dbReference type="InterPro" id="IPR030240">
    <property type="entry name" value="ABCC4_TMD1"/>
</dbReference>
<dbReference type="InterPro" id="IPR047083">
    <property type="entry name" value="ABCC4_TMD2"/>
</dbReference>
<dbReference type="InterPro" id="IPR027417">
    <property type="entry name" value="P-loop_NTPase"/>
</dbReference>
<dbReference type="PANTHER" id="PTHR24223">
    <property type="entry name" value="ATP-BINDING CASSETTE SUB-FAMILY C"/>
    <property type="match status" value="1"/>
</dbReference>
<dbReference type="PANTHER" id="PTHR24223:SF357">
    <property type="entry name" value="ATP-BINDING CASSETTE SUB-FAMILY C MEMBER 4"/>
    <property type="match status" value="1"/>
</dbReference>
<dbReference type="Pfam" id="PF00664">
    <property type="entry name" value="ABC_membrane"/>
    <property type="match status" value="2"/>
</dbReference>
<dbReference type="Pfam" id="PF00005">
    <property type="entry name" value="ABC_tran"/>
    <property type="match status" value="2"/>
</dbReference>
<dbReference type="SMART" id="SM00382">
    <property type="entry name" value="AAA"/>
    <property type="match status" value="2"/>
</dbReference>
<dbReference type="SUPFAM" id="SSF90123">
    <property type="entry name" value="ABC transporter transmembrane region"/>
    <property type="match status" value="2"/>
</dbReference>
<dbReference type="SUPFAM" id="SSF52540">
    <property type="entry name" value="P-loop containing nucleoside triphosphate hydrolases"/>
    <property type="match status" value="2"/>
</dbReference>
<dbReference type="PROSITE" id="PS50929">
    <property type="entry name" value="ABC_TM1F"/>
    <property type="match status" value="2"/>
</dbReference>
<dbReference type="PROSITE" id="PS00211">
    <property type="entry name" value="ABC_TRANSPORTER_1"/>
    <property type="match status" value="2"/>
</dbReference>
<dbReference type="PROSITE" id="PS50893">
    <property type="entry name" value="ABC_TRANSPORTER_2"/>
    <property type="match status" value="2"/>
</dbReference>